<keyword id="KW-0002">3D-structure</keyword>
<keyword id="KW-0031">Aminopeptidase</keyword>
<keyword id="KW-0130">Cell adhesion</keyword>
<keyword id="KW-0965">Cell junction</keyword>
<keyword id="KW-1003">Cell membrane</keyword>
<keyword id="KW-0966">Cell projection</keyword>
<keyword id="KW-0903">Direct protein sequencing</keyword>
<keyword id="KW-1015">Disulfide bond</keyword>
<keyword id="KW-0325">Glycoprotein</keyword>
<keyword id="KW-0945">Host-virus interaction</keyword>
<keyword id="KW-0378">Hydrolase</keyword>
<keyword id="KW-0472">Membrane</keyword>
<keyword id="KW-0645">Protease</keyword>
<keyword id="KW-1267">Proteomics identification</keyword>
<keyword id="KW-0675">Receptor</keyword>
<keyword id="KW-1185">Reference proteome</keyword>
<keyword id="KW-0964">Secreted</keyword>
<keyword id="KW-0720">Serine protease</keyword>
<keyword id="KW-0735">Signal-anchor</keyword>
<keyword id="KW-0812">Transmembrane</keyword>
<keyword id="KW-1133">Transmembrane helix</keyword>
<proteinExistence type="evidence at protein level"/>
<organism>
    <name type="scientific">Homo sapiens</name>
    <name type="common">Human</name>
    <dbReference type="NCBI Taxonomy" id="9606"/>
    <lineage>
        <taxon>Eukaryota</taxon>
        <taxon>Metazoa</taxon>
        <taxon>Chordata</taxon>
        <taxon>Craniata</taxon>
        <taxon>Vertebrata</taxon>
        <taxon>Euteleostomi</taxon>
        <taxon>Mammalia</taxon>
        <taxon>Eutheria</taxon>
        <taxon>Euarchontoglires</taxon>
        <taxon>Primates</taxon>
        <taxon>Haplorrhini</taxon>
        <taxon>Catarrhini</taxon>
        <taxon>Hominidae</taxon>
        <taxon>Homo</taxon>
    </lineage>
</organism>
<feature type="chain" id="PRO_0000027213" description="Dipeptidyl peptidase 4 membrane form">
    <location>
        <begin position="1"/>
        <end position="766"/>
    </location>
</feature>
<feature type="chain" id="PRO_0000027214" description="Dipeptidyl peptidase 4 soluble form">
    <location>
        <begin position="39"/>
        <end position="766"/>
    </location>
</feature>
<feature type="topological domain" description="Cytoplasmic" evidence="1">
    <location>
        <begin position="1"/>
        <end position="6"/>
    </location>
</feature>
<feature type="transmembrane region" description="Helical; Signal-anchor for type II membrane protein" evidence="1">
    <location>
        <begin position="7"/>
        <end position="28"/>
    </location>
</feature>
<feature type="topological domain" description="Extracellular" evidence="1">
    <location>
        <begin position="29"/>
        <end position="766"/>
    </location>
</feature>
<feature type="active site" description="Charge relay system" evidence="2">
    <location>
        <position position="630"/>
    </location>
</feature>
<feature type="active site" description="Charge relay system" evidence="2">
    <location>
        <position position="708"/>
    </location>
</feature>
<feature type="active site" description="Charge relay system" evidence="2">
    <location>
        <position position="740"/>
    </location>
</feature>
<feature type="glycosylation site" description="N-linked (GlcNAc...) asparagine" evidence="10 11 14 27 29 38">
    <location>
        <position position="85"/>
    </location>
</feature>
<feature type="glycosylation site" description="N-linked (GlcNAc...) asparagine" evidence="26 27 29 38">
    <location>
        <position position="92"/>
    </location>
</feature>
<feature type="glycosylation site" description="N-linked (GlcNAc...) asparagine" evidence="10 14 26 27 29 38">
    <location>
        <position position="150"/>
    </location>
</feature>
<feature type="glycosylation site" description="N-linked (GlcNAc...) asparagine" evidence="10 11 27 29 38">
    <location>
        <position position="219"/>
    </location>
</feature>
<feature type="glycosylation site" description="N-linked (GlcNAc...) asparagine" evidence="10 11 14 27 29 38">
    <location>
        <position position="229"/>
    </location>
</feature>
<feature type="glycosylation site" description="N-linked (GlcNAc...) asparagine" evidence="10 11 14 29 38">
    <location>
        <position position="281"/>
    </location>
</feature>
<feature type="glycosylation site" description="N-linked (GlcNAc...) asparagine" evidence="10 11 29 38">
    <location>
        <position position="321"/>
    </location>
</feature>
<feature type="glycosylation site" description="N-linked (GlcNAc...) asparagine" evidence="10 19 26 27 29 38">
    <location>
        <position position="520"/>
    </location>
</feature>
<feature type="glycosylation site" description="N-linked (GlcNAc...) asparagine" evidence="19 26">
    <location>
        <position position="685"/>
    </location>
</feature>
<feature type="disulfide bond" evidence="29 38">
    <location>
        <begin position="328"/>
        <end position="339"/>
    </location>
</feature>
<feature type="disulfide bond" evidence="29 38">
    <location>
        <begin position="385"/>
        <end position="394"/>
    </location>
</feature>
<feature type="disulfide bond" evidence="29 38">
    <location>
        <begin position="444"/>
        <end position="447"/>
    </location>
</feature>
<feature type="disulfide bond" evidence="29 38">
    <location>
        <begin position="454"/>
        <end position="472"/>
    </location>
</feature>
<feature type="disulfide bond" evidence="29 38">
    <location>
        <begin position="649"/>
        <end position="762"/>
    </location>
</feature>
<feature type="sequence variant" id="VAR_084545" description="In dbSNP:rs56179129." evidence="30">
    <original>V</original>
    <variation>I</variation>
    <location>
        <position position="266"/>
    </location>
</feature>
<feature type="mutagenesis site" description="Does not inhibit dipeptidyl peptidase activity, interaction with ADA and homodimer formation." evidence="15">
    <original>N</original>
    <variation>A</variation>
    <location>
        <position position="85"/>
    </location>
</feature>
<feature type="mutagenesis site" description="Does not inhibit dipeptidyl peptidase activity, interaction with ADA and homodimer formation." evidence="15">
    <original>N</original>
    <variation>A</variation>
    <location>
        <position position="92"/>
    </location>
</feature>
<feature type="mutagenesis site" description="Does not inhibit dipeptidyl peptidase activity, interaction with ADA and homodimer formation." evidence="15">
    <original>N</original>
    <variation>A</variation>
    <location>
        <position position="150"/>
    </location>
</feature>
<feature type="mutagenesis site" description="Inhibits dipeptidyl peptidase activity." evidence="3">
    <original>E</original>
    <variation>K</variation>
    <location>
        <position position="205"/>
    </location>
</feature>
<feature type="mutagenesis site" description="Inhibits dipeptidyl peptidase activity." evidence="3">
    <original>E</original>
    <variation>L</variation>
    <location>
        <position position="206"/>
    </location>
</feature>
<feature type="mutagenesis site" description="Does not inhibit dipeptidyl peptidase activity, interaction with ADA and homodimer formation." evidence="15">
    <original>N</original>
    <variation>A</variation>
    <location>
        <position position="219"/>
    </location>
</feature>
<feature type="mutagenesis site" description="Does not inhibit dipeptidyl peptidase activity, interaction with ADA and homodimer formation." evidence="15">
    <original>N</original>
    <variation>A</variation>
    <location>
        <position position="229"/>
    </location>
</feature>
<feature type="mutagenesis site" description="Does not inhibit dipeptidyl peptidase activity, interaction with ADA and homodimer formation." evidence="15">
    <original>N</original>
    <variation>A</variation>
    <location>
        <position position="281"/>
    </location>
</feature>
<feature type="mutagenesis site" description="Does not inhibit dipeptidyl peptidase activity, interaction with ADA and homodimer formation." evidence="15">
    <original>N</original>
    <variation>A</variation>
    <location>
        <position position="321"/>
    </location>
</feature>
<feature type="mutagenesis site" description="Does not inhibit dipeptidyl peptidase activity, interaction with ADA and homodimer formation." evidence="15">
    <original>N</original>
    <variation>A</variation>
    <location>
        <position position="520"/>
    </location>
</feature>
<feature type="mutagenesis site" description="Does not inhibit dipeptidyl peptidase activity, interaction with ADA and homodimer formation." evidence="15">
    <original>N</original>
    <variation>A</variation>
    <location>
        <position position="685"/>
    </location>
</feature>
<feature type="mutagenesis site" description="Inhibits weakly homodimerization and dipeptidyl peptidase activity." evidence="17 23">
    <original>H</original>
    <variation>A</variation>
    <location>
        <position position="750"/>
    </location>
</feature>
<feature type="mutagenesis site" description="Inhibits strongly homodimerization, dipeptidyl peptidase activity, interaction with CARD11 and T-cell costimulation activity." evidence="17 23">
    <original>H</original>
    <variation>E</variation>
    <location>
        <position position="750"/>
    </location>
</feature>
<feature type="sequence conflict" description="In Ref. 2; AAA52308." evidence="35" ref="2">
    <original>K</original>
    <variation>R</variation>
    <location>
        <position position="6"/>
    </location>
</feature>
<feature type="sequence conflict" description="In Ref. 1; CAA43118." evidence="35" ref="1">
    <original>V</original>
    <variation>I</variation>
    <location>
        <position position="7"/>
    </location>
</feature>
<feature type="sequence conflict" description="In Ref. 1; CAA43118." evidence="35" ref="1">
    <original>S</original>
    <variation>I</variation>
    <location>
        <position position="437"/>
    </location>
</feature>
<feature type="sequence conflict" description="In Ref. 2; AAA52308." evidence="35" ref="2">
    <original>T</original>
    <variation>I</variation>
    <location>
        <position position="557"/>
    </location>
</feature>
<feature type="sequence conflict" description="In Ref. 2; AAA52308." evidence="35" ref="2">
    <original>D</original>
    <variation>E</variation>
    <location>
        <position position="663"/>
    </location>
</feature>
<feature type="strand" evidence="46">
    <location>
        <begin position="40"/>
        <end position="42"/>
    </location>
</feature>
<feature type="helix" evidence="47">
    <location>
        <begin position="45"/>
        <end position="50"/>
    </location>
</feature>
<feature type="strand" evidence="47">
    <location>
        <begin position="60"/>
        <end position="62"/>
    </location>
</feature>
<feature type="strand" evidence="47">
    <location>
        <begin position="64"/>
        <end position="72"/>
    </location>
</feature>
<feature type="strand" evidence="47">
    <location>
        <begin position="75"/>
        <end position="80"/>
    </location>
</feature>
<feature type="turn" evidence="47">
    <location>
        <begin position="81"/>
        <end position="83"/>
    </location>
</feature>
<feature type="strand" evidence="47">
    <location>
        <begin position="86"/>
        <end position="90"/>
    </location>
</feature>
<feature type="turn" evidence="47">
    <location>
        <begin position="92"/>
        <end position="97"/>
    </location>
</feature>
<feature type="strand" evidence="49">
    <location>
        <begin position="98"/>
        <end position="100"/>
    </location>
</feature>
<feature type="strand" evidence="47">
    <location>
        <begin position="104"/>
        <end position="107"/>
    </location>
</feature>
<feature type="strand" evidence="47">
    <location>
        <begin position="111"/>
        <end position="122"/>
    </location>
</feature>
<feature type="strand" evidence="47">
    <location>
        <begin position="124"/>
        <end position="126"/>
    </location>
</feature>
<feature type="strand" evidence="47">
    <location>
        <begin position="128"/>
        <end position="136"/>
    </location>
</feature>
<feature type="turn" evidence="47">
    <location>
        <begin position="137"/>
        <end position="140"/>
    </location>
</feature>
<feature type="strand" evidence="42">
    <location>
        <begin position="141"/>
        <end position="143"/>
    </location>
</feature>
<feature type="strand" evidence="47">
    <location>
        <begin position="152"/>
        <end position="157"/>
    </location>
</feature>
<feature type="strand" evidence="47">
    <location>
        <begin position="159"/>
        <end position="162"/>
    </location>
</feature>
<feature type="strand" evidence="47">
    <location>
        <begin position="164"/>
        <end position="168"/>
    </location>
</feature>
<feature type="strand" evidence="47">
    <location>
        <begin position="171"/>
        <end position="177"/>
    </location>
</feature>
<feature type="turn" evidence="47">
    <location>
        <begin position="191"/>
        <end position="193"/>
    </location>
</feature>
<feature type="strand" evidence="47">
    <location>
        <begin position="194"/>
        <end position="198"/>
    </location>
</feature>
<feature type="helix" evidence="47">
    <location>
        <begin position="201"/>
        <end position="206"/>
    </location>
</feature>
<feature type="strand" evidence="47">
    <location>
        <begin position="208"/>
        <end position="212"/>
    </location>
</feature>
<feature type="strand" evidence="47">
    <location>
        <begin position="214"/>
        <end position="216"/>
    </location>
</feature>
<feature type="strand" evidence="47">
    <location>
        <begin position="220"/>
        <end position="229"/>
    </location>
</feature>
<feature type="strand" evidence="47">
    <location>
        <begin position="235"/>
        <end position="240"/>
    </location>
</feature>
<feature type="strand" evidence="51">
    <location>
        <begin position="243"/>
        <end position="245"/>
    </location>
</feature>
<feature type="strand" evidence="47">
    <location>
        <begin position="250"/>
        <end position="255"/>
    </location>
</feature>
<feature type="strand" evidence="47">
    <location>
        <begin position="265"/>
        <end position="272"/>
    </location>
</feature>
<feature type="helix" evidence="48">
    <location>
        <begin position="273"/>
        <end position="275"/>
    </location>
</feature>
<feature type="strand" evidence="47">
    <location>
        <begin position="278"/>
        <end position="280"/>
    </location>
</feature>
<feature type="strand" evidence="47">
    <location>
        <begin position="284"/>
        <end position="287"/>
    </location>
</feature>
<feature type="helix" evidence="47">
    <location>
        <begin position="291"/>
        <end position="294"/>
    </location>
</feature>
<feature type="strand" evidence="47">
    <location>
        <begin position="298"/>
        <end position="307"/>
    </location>
</feature>
<feature type="strand" evidence="47">
    <location>
        <begin position="310"/>
        <end position="319"/>
    </location>
</feature>
<feature type="strand" evidence="47">
    <location>
        <begin position="322"/>
        <end position="330"/>
    </location>
</feature>
<feature type="turn" evidence="47">
    <location>
        <begin position="332"/>
        <end position="334"/>
    </location>
</feature>
<feature type="strand" evidence="47">
    <location>
        <begin position="337"/>
        <end position="339"/>
    </location>
</feature>
<feature type="helix" evidence="47">
    <location>
        <begin position="341"/>
        <end position="343"/>
    </location>
</feature>
<feature type="strand" evidence="47">
    <location>
        <begin position="345"/>
        <end position="348"/>
    </location>
</feature>
<feature type="strand" evidence="47">
    <location>
        <begin position="350"/>
        <end position="352"/>
    </location>
</feature>
<feature type="strand" evidence="47">
    <location>
        <begin position="354"/>
        <end position="358"/>
    </location>
</feature>
<feature type="strand" evidence="39">
    <location>
        <begin position="362"/>
        <end position="364"/>
    </location>
</feature>
<feature type="strand" evidence="47">
    <location>
        <begin position="368"/>
        <end position="376"/>
    </location>
</feature>
<feature type="strand" evidence="41">
    <location>
        <begin position="378"/>
        <end position="380"/>
    </location>
</feature>
<feature type="strand" evidence="47">
    <location>
        <begin position="382"/>
        <end position="388"/>
    </location>
</feature>
<feature type="strand" evidence="44">
    <location>
        <begin position="391"/>
        <end position="393"/>
    </location>
</feature>
<feature type="strand" evidence="47">
    <location>
        <begin position="395"/>
        <end position="397"/>
    </location>
</feature>
<feature type="strand" evidence="47">
    <location>
        <begin position="400"/>
        <end position="402"/>
    </location>
</feature>
<feature type="strand" evidence="47">
    <location>
        <begin position="404"/>
        <end position="410"/>
    </location>
</feature>
<feature type="strand" evidence="47">
    <location>
        <begin position="412"/>
        <end position="420"/>
    </location>
</feature>
<feature type="helix" evidence="47">
    <location>
        <begin position="422"/>
        <end position="424"/>
    </location>
</feature>
<feature type="strand" evidence="47">
    <location>
        <begin position="429"/>
        <end position="435"/>
    </location>
</feature>
<feature type="strand" evidence="47">
    <location>
        <begin position="438"/>
        <end position="446"/>
    </location>
</feature>
<feature type="turn" evidence="40">
    <location>
        <begin position="447"/>
        <end position="449"/>
    </location>
</feature>
<feature type="turn" evidence="47">
    <location>
        <begin position="451"/>
        <end position="453"/>
    </location>
</feature>
<feature type="strand" evidence="47">
    <location>
        <begin position="456"/>
        <end position="461"/>
    </location>
</feature>
<feature type="strand" evidence="47">
    <location>
        <begin position="465"/>
        <end position="472"/>
    </location>
</feature>
<feature type="strand" evidence="47">
    <location>
        <begin position="474"/>
        <end position="477"/>
    </location>
</feature>
<feature type="strand" evidence="47">
    <location>
        <begin position="479"/>
        <end position="484"/>
    </location>
</feature>
<feature type="turn" evidence="47">
    <location>
        <begin position="485"/>
        <end position="488"/>
    </location>
</feature>
<feature type="strand" evidence="47">
    <location>
        <begin position="489"/>
        <end position="495"/>
    </location>
</feature>
<feature type="helix" evidence="47">
    <location>
        <begin position="498"/>
        <end position="504"/>
    </location>
</feature>
<feature type="strand" evidence="43">
    <location>
        <begin position="506"/>
        <end position="508"/>
    </location>
</feature>
<feature type="strand" evidence="47">
    <location>
        <begin position="511"/>
        <end position="519"/>
    </location>
</feature>
<feature type="strand" evidence="47">
    <location>
        <begin position="522"/>
        <end position="530"/>
    </location>
</feature>
<feature type="strand" evidence="40">
    <location>
        <begin position="536"/>
        <end position="538"/>
    </location>
</feature>
<feature type="strand" evidence="47">
    <location>
        <begin position="540"/>
        <end position="545"/>
    </location>
</feature>
<feature type="helix" evidence="47">
    <location>
        <begin position="563"/>
        <end position="569"/>
    </location>
</feature>
<feature type="strand" evidence="47">
    <location>
        <begin position="574"/>
        <end position="578"/>
    </location>
</feature>
<feature type="strand" evidence="47">
    <location>
        <begin position="584"/>
        <end position="586"/>
    </location>
</feature>
<feature type="helix" evidence="47">
    <location>
        <begin position="588"/>
        <end position="591"/>
    </location>
</feature>
<feature type="helix" evidence="47">
    <location>
        <begin position="592"/>
        <end position="594"/>
    </location>
</feature>
<feature type="turn" evidence="50">
    <location>
        <begin position="598"/>
        <end position="600"/>
    </location>
</feature>
<feature type="helix" evidence="47">
    <location>
        <begin position="601"/>
        <end position="614"/>
    </location>
</feature>
<feature type="turn" evidence="45">
    <location>
        <begin position="615"/>
        <end position="617"/>
    </location>
</feature>
<feature type="strand" evidence="47">
    <location>
        <begin position="619"/>
        <end position="629"/>
    </location>
</feature>
<feature type="helix" evidence="47">
    <location>
        <begin position="631"/>
        <end position="640"/>
    </location>
</feature>
<feature type="turn" evidence="47">
    <location>
        <begin position="641"/>
        <end position="643"/>
    </location>
</feature>
<feature type="strand" evidence="47">
    <location>
        <begin position="648"/>
        <end position="654"/>
    </location>
</feature>
<feature type="helix" evidence="47">
    <location>
        <begin position="659"/>
        <end position="661"/>
    </location>
</feature>
<feature type="helix" evidence="47">
    <location>
        <begin position="664"/>
        <end position="671"/>
    </location>
</feature>
<feature type="turn" evidence="47">
    <location>
        <begin position="676"/>
        <end position="679"/>
    </location>
</feature>
<feature type="helix" evidence="47">
    <location>
        <begin position="680"/>
        <end position="685"/>
    </location>
</feature>
<feature type="helix" evidence="47">
    <location>
        <begin position="689"/>
        <end position="697"/>
    </location>
</feature>
<feature type="strand" evidence="47">
    <location>
        <begin position="698"/>
        <end position="705"/>
    </location>
</feature>
<feature type="strand" evidence="47">
    <location>
        <begin position="709"/>
        <end position="711"/>
    </location>
</feature>
<feature type="helix" evidence="47">
    <location>
        <begin position="714"/>
        <end position="725"/>
    </location>
</feature>
<feature type="strand" evidence="47">
    <location>
        <begin position="731"/>
        <end position="735"/>
    </location>
</feature>
<feature type="helix" evidence="47">
    <location>
        <begin position="745"/>
        <end position="762"/>
    </location>
</feature>
<gene>
    <name evidence="37" type="primary">DPP4</name>
    <name type="synonym">ADCP2</name>
    <name type="synonym">CD26</name>
</gene>
<protein>
    <recommendedName>
        <fullName evidence="35">Dipeptidyl peptidase 4</fullName>
        <ecNumber evidence="4">3.4.14.5</ecNumber>
    </recommendedName>
    <alternativeName>
        <fullName>ADABP</fullName>
    </alternativeName>
    <alternativeName>
        <fullName>Adenosine deaminase complexing protein 2</fullName>
        <shortName>ADCP-2</shortName>
    </alternativeName>
    <alternativeName>
        <fullName>Dipeptidyl peptidase IV</fullName>
        <shortName>DPP IV</shortName>
    </alternativeName>
    <alternativeName>
        <fullName>T-cell activation antigen CD26</fullName>
    </alternativeName>
    <alternativeName>
        <fullName>TP103</fullName>
    </alternativeName>
    <cdAntigenName>CD26</cdAntigenName>
    <component>
        <recommendedName>
            <fullName>Dipeptidyl peptidase 4 membrane form</fullName>
        </recommendedName>
        <alternativeName>
            <fullName>Dipeptidyl peptidase IV membrane form</fullName>
        </alternativeName>
    </component>
    <component>
        <recommendedName>
            <fullName>Dipeptidyl peptidase 4 soluble form</fullName>
        </recommendedName>
        <alternativeName>
            <fullName>Dipeptidyl peptidase IV soluble form</fullName>
        </alternativeName>
    </component>
</protein>
<sequence>MKTPWKVLLGLLGAAALVTIITVPVVLLNKGTDDATADSRKTYTLTDYLKNTYRLKLYSLRWISDHEYLYKQENNILVFNAEYGNSSVFLENSTFDEFGHSINDYSISPDGQFILLEYNYVKQWRHSYTASYDIYDLNKRQLITEERIPNNTQWVTWSPVGHKLAYVWNNDIYVKIEPNLPSYRITWTGKEDIIYNGITDWVYEEEVFSAYSALWWSPNGTFLAYAQFNDTEVPLIEYSFYSDESLQYPKTVRVPYPKAGAVNPTVKFFVVNTDSLSSVTNATSIQITAPASMLIGDHYLCDVTWATQERISLQWLRRIQNYSVMDICDYDESSGRWNCLVARQHIEMSTTGWVGRFRPSEPHFTLDGNSFYKIISNEEGYRHICYFQIDKKDCTFITKGTWEVIGIEALTSDYLYYISNEYKGMPGGRNLYKIQLSDYTKVTCLSCELNPERCQYYSVSFSKEAKYYQLRCSGPGLPLYTLHSSVNDKGLRVLEDNSALDKMLQNVQMPSKKLDFIILNETKFWYQMILPPHFDKSKKYPLLLDVYAGPCSQKADTVFRLNWATYLASTENIIVASFDGRGSGYQGDKIMHAINRRLGTFEVEDQIEAARQFSKMGFVDNKRIAIWGWSYGGYVTSMVLGSGSGVFKCGIAVAPVSRWEYYDSVYTERYMGLPTPEDNLDHYRNSTVMSRAENFKQVEYLLIHGTADDNVHFQQSAQISKALVDVGVDFQAMWYTDEDHGIASSTAHQHIYTHMSHFIKQCFSLP</sequence>
<accession>P27487</accession>
<accession>Q53TN1</accession>
<reference key="1">
    <citation type="journal article" date="1992" name="Biochim. Biophys. Acta">
        <title>Molecular cloning and sequence analysis of human dipeptidyl peptidase IV, a serine proteinase on the cell surface.</title>
        <authorList>
            <person name="Misumi Y."/>
            <person name="Hayashi Y."/>
            <person name="Arakawa F."/>
            <person name="Ikehara Y."/>
        </authorList>
    </citation>
    <scope>NUCLEOTIDE SEQUENCE [MRNA]</scope>
    <source>
        <tissue>Liver</tissue>
    </source>
</reference>
<reference key="2">
    <citation type="journal article" date="1992" name="J. Biol. Chem.">
        <title>Dipeptidyl peptidase IV (CD 26) gene expression in enterocyte-like colon cancer cell lines HT-29 and Caco-2. Cloning of the complete human coding sequence and changes of dipeptidyl peptidase IV mRNA levels during cell differentiation.</title>
        <authorList>
            <person name="Darmoul D."/>
            <person name="Lacasa M."/>
            <person name="Baricault L."/>
            <person name="Marguet D."/>
            <person name="Sapin C."/>
            <person name="Trotot P."/>
            <person name="Barbat A."/>
        </authorList>
    </citation>
    <scope>NUCLEOTIDE SEQUENCE [MRNA]</scope>
    <source>
        <tissue>Colon</tissue>
    </source>
</reference>
<reference key="3">
    <citation type="journal article" date="1992" name="J. Immunol.">
        <title>Cloning and functional expression of the T cell activation antigen CD26.</title>
        <authorList>
            <person name="Tanaka T."/>
            <person name="Camerini D."/>
            <person name="Seed B."/>
            <person name="Torimoto Y."/>
            <person name="Dang N.H."/>
            <person name="Kameoka J."/>
            <person name="Dahlberg H.N."/>
            <person name="Schlossman S.F."/>
            <person name="Morimoto C."/>
        </authorList>
    </citation>
    <scope>NUCLEOTIDE SEQUENCE [MRNA]</scope>
    <source>
        <tissue>Peripheral blood</tissue>
    </source>
</reference>
<reference key="4">
    <citation type="journal article" date="1993" name="J. Immunol.">
        <authorList>
            <person name="Tanaka T."/>
        </authorList>
    </citation>
    <scope>ERRATUM OF PUBMED:1352530</scope>
</reference>
<reference key="5">
    <citation type="journal article" date="1994" name="Immunogenetics">
        <title>Genomic organization, exact localization, and tissue expression of the human CD26 (dipeptidyl peptidase IV) gene.</title>
        <authorList>
            <person name="Abbott C.A."/>
            <person name="Baker E."/>
            <person name="Sutherland G.R."/>
            <person name="McCaughan G.W."/>
        </authorList>
    </citation>
    <scope>NUCLEOTIDE SEQUENCE [GENOMIC DNA]</scope>
    <source>
        <tissue>Placenta</tissue>
    </source>
</reference>
<reference key="6">
    <citation type="journal article" date="2008" name="Nat. Methods">
        <title>Human protein factory for converting the transcriptome into an in vitro-expressed proteome.</title>
        <authorList>
            <person name="Goshima N."/>
            <person name="Kawamura Y."/>
            <person name="Fukumoto A."/>
            <person name="Miura A."/>
            <person name="Honma R."/>
            <person name="Satoh R."/>
            <person name="Wakamatsu A."/>
            <person name="Yamamoto J."/>
            <person name="Kimura K."/>
            <person name="Nishikawa T."/>
            <person name="Andoh T."/>
            <person name="Iida Y."/>
            <person name="Ishikawa K."/>
            <person name="Ito E."/>
            <person name="Kagawa N."/>
            <person name="Kaminaga C."/>
            <person name="Kanehori K."/>
            <person name="Kawakami B."/>
            <person name="Kenmochi K."/>
            <person name="Kimura R."/>
            <person name="Kobayashi M."/>
            <person name="Kuroita T."/>
            <person name="Kuwayama H."/>
            <person name="Maruyama Y."/>
            <person name="Matsuo K."/>
            <person name="Minami K."/>
            <person name="Mitsubori M."/>
            <person name="Mori M."/>
            <person name="Morishita R."/>
            <person name="Murase A."/>
            <person name="Nishikawa A."/>
            <person name="Nishikawa S."/>
            <person name="Okamoto T."/>
            <person name="Sakagami N."/>
            <person name="Sakamoto Y."/>
            <person name="Sasaki Y."/>
            <person name="Seki T."/>
            <person name="Sono S."/>
            <person name="Sugiyama A."/>
            <person name="Sumiya T."/>
            <person name="Takayama T."/>
            <person name="Takayama Y."/>
            <person name="Takeda H."/>
            <person name="Togashi T."/>
            <person name="Yahata K."/>
            <person name="Yamada H."/>
            <person name="Yanagisawa Y."/>
            <person name="Endo Y."/>
            <person name="Imamoto F."/>
            <person name="Kisu Y."/>
            <person name="Tanaka S."/>
            <person name="Isogai T."/>
            <person name="Imai J."/>
            <person name="Watanabe S."/>
            <person name="Nomura N."/>
        </authorList>
    </citation>
    <scope>NUCLEOTIDE SEQUENCE [LARGE SCALE MRNA]</scope>
</reference>
<reference key="7">
    <citation type="journal article" date="2005" name="Nature">
        <title>Generation and annotation of the DNA sequences of human chromosomes 2 and 4.</title>
        <authorList>
            <person name="Hillier L.W."/>
            <person name="Graves T.A."/>
            <person name="Fulton R.S."/>
            <person name="Fulton L.A."/>
            <person name="Pepin K.H."/>
            <person name="Minx P."/>
            <person name="Wagner-McPherson C."/>
            <person name="Layman D."/>
            <person name="Wylie K."/>
            <person name="Sekhon M."/>
            <person name="Becker M.C."/>
            <person name="Fewell G.A."/>
            <person name="Delehaunty K.D."/>
            <person name="Miner T.L."/>
            <person name="Nash W.E."/>
            <person name="Kremitzki C."/>
            <person name="Oddy L."/>
            <person name="Du H."/>
            <person name="Sun H."/>
            <person name="Bradshaw-Cordum H."/>
            <person name="Ali J."/>
            <person name="Carter J."/>
            <person name="Cordes M."/>
            <person name="Harris A."/>
            <person name="Isak A."/>
            <person name="van Brunt A."/>
            <person name="Nguyen C."/>
            <person name="Du F."/>
            <person name="Courtney L."/>
            <person name="Kalicki J."/>
            <person name="Ozersky P."/>
            <person name="Abbott S."/>
            <person name="Armstrong J."/>
            <person name="Belter E.A."/>
            <person name="Caruso L."/>
            <person name="Cedroni M."/>
            <person name="Cotton M."/>
            <person name="Davidson T."/>
            <person name="Desai A."/>
            <person name="Elliott G."/>
            <person name="Erb T."/>
            <person name="Fronick C."/>
            <person name="Gaige T."/>
            <person name="Haakenson W."/>
            <person name="Haglund K."/>
            <person name="Holmes A."/>
            <person name="Harkins R."/>
            <person name="Kim K."/>
            <person name="Kruchowski S.S."/>
            <person name="Strong C.M."/>
            <person name="Grewal N."/>
            <person name="Goyea E."/>
            <person name="Hou S."/>
            <person name="Levy A."/>
            <person name="Martinka S."/>
            <person name="Mead K."/>
            <person name="McLellan M.D."/>
            <person name="Meyer R."/>
            <person name="Randall-Maher J."/>
            <person name="Tomlinson C."/>
            <person name="Dauphin-Kohlberg S."/>
            <person name="Kozlowicz-Reilly A."/>
            <person name="Shah N."/>
            <person name="Swearengen-Shahid S."/>
            <person name="Snider J."/>
            <person name="Strong J.T."/>
            <person name="Thompson J."/>
            <person name="Yoakum M."/>
            <person name="Leonard S."/>
            <person name="Pearman C."/>
            <person name="Trani L."/>
            <person name="Radionenko M."/>
            <person name="Waligorski J.E."/>
            <person name="Wang C."/>
            <person name="Rock S.M."/>
            <person name="Tin-Wollam A.-M."/>
            <person name="Maupin R."/>
            <person name="Latreille P."/>
            <person name="Wendl M.C."/>
            <person name="Yang S.-P."/>
            <person name="Pohl C."/>
            <person name="Wallis J.W."/>
            <person name="Spieth J."/>
            <person name="Bieri T.A."/>
            <person name="Berkowicz N."/>
            <person name="Nelson J.O."/>
            <person name="Osborne J."/>
            <person name="Ding L."/>
            <person name="Meyer R."/>
            <person name="Sabo A."/>
            <person name="Shotland Y."/>
            <person name="Sinha P."/>
            <person name="Wohldmann P.E."/>
            <person name="Cook L.L."/>
            <person name="Hickenbotham M.T."/>
            <person name="Eldred J."/>
            <person name="Williams D."/>
            <person name="Jones T.A."/>
            <person name="She X."/>
            <person name="Ciccarelli F.D."/>
            <person name="Izaurralde E."/>
            <person name="Taylor J."/>
            <person name="Schmutz J."/>
            <person name="Myers R.M."/>
            <person name="Cox D.R."/>
            <person name="Huang X."/>
            <person name="McPherson J.D."/>
            <person name="Mardis E.R."/>
            <person name="Clifton S.W."/>
            <person name="Warren W.C."/>
            <person name="Chinwalla A.T."/>
            <person name="Eddy S.R."/>
            <person name="Marra M.A."/>
            <person name="Ovcharenko I."/>
            <person name="Furey T.S."/>
            <person name="Miller W."/>
            <person name="Eichler E.E."/>
            <person name="Bork P."/>
            <person name="Suyama M."/>
            <person name="Torrents D."/>
            <person name="Waterston R.H."/>
            <person name="Wilson R.K."/>
        </authorList>
    </citation>
    <scope>NUCLEOTIDE SEQUENCE [LARGE SCALE GENOMIC DNA]</scope>
</reference>
<reference key="8">
    <citation type="submission" date="2005-09" db="EMBL/GenBank/DDBJ databases">
        <authorList>
            <person name="Mural R.J."/>
            <person name="Istrail S."/>
            <person name="Sutton G.G."/>
            <person name="Florea L."/>
            <person name="Halpern A.L."/>
            <person name="Mobarry C.M."/>
            <person name="Lippert R."/>
            <person name="Walenz B."/>
            <person name="Shatkay H."/>
            <person name="Dew I."/>
            <person name="Miller J.R."/>
            <person name="Flanigan M.J."/>
            <person name="Edwards N.J."/>
            <person name="Bolanos R."/>
            <person name="Fasulo D."/>
            <person name="Halldorsson B.V."/>
            <person name="Hannenhalli S."/>
            <person name="Turner R."/>
            <person name="Yooseph S."/>
            <person name="Lu F."/>
            <person name="Nusskern D.R."/>
            <person name="Shue B.C."/>
            <person name="Zheng X.H."/>
            <person name="Zhong F."/>
            <person name="Delcher A.L."/>
            <person name="Huson D.H."/>
            <person name="Kravitz S.A."/>
            <person name="Mouchard L."/>
            <person name="Reinert K."/>
            <person name="Remington K.A."/>
            <person name="Clark A.G."/>
            <person name="Waterman M.S."/>
            <person name="Eichler E.E."/>
            <person name="Adams M.D."/>
            <person name="Hunkapiller M.W."/>
            <person name="Myers E.W."/>
            <person name="Venter J.C."/>
        </authorList>
    </citation>
    <scope>NUCLEOTIDE SEQUENCE [LARGE SCALE GENOMIC DNA]</scope>
</reference>
<reference key="9">
    <citation type="journal article" date="2004" name="Genome Res.">
        <title>The status, quality, and expansion of the NIH full-length cDNA project: the Mammalian Gene Collection (MGC).</title>
        <authorList>
            <consortium name="The MGC Project Team"/>
        </authorList>
    </citation>
    <scope>NUCLEOTIDE SEQUENCE [LARGE SCALE MRNA]</scope>
    <source>
        <tissue>Prostate</tissue>
        <tissue>Uterus</tissue>
    </source>
</reference>
<reference key="10">
    <citation type="journal article" date="1990" name="Ann. Hum. Genet.">
        <title>Isolation of a cDNA probe for the human intestinal dipeptidylpeptidase IV and assignment of the gene locus DPP4 to chromosome 2.</title>
        <authorList>
            <person name="Darmoul D."/>
            <person name="Lacasa M."/>
            <person name="Chantret I."/>
            <person name="Swallow D."/>
            <person name="Trugnan G."/>
        </authorList>
    </citation>
    <scope>NUCLEOTIDE SEQUENCE [MRNA] OF 545-766</scope>
    <source>
        <tissue>Colon</tissue>
    </source>
</reference>
<reference key="11">
    <citation type="journal article" date="1995" name="Biochem. J.">
        <title>Human dipeptidyl peptidase IV gene promoter: tissue-specific regulation from a TATA-less GC-rich sequence characteristic of a housekeeping gene promoter.</title>
        <authorList>
            <person name="Boehm S.K."/>
            <person name="Gum J.R. Jr."/>
            <person name="Erickson R.H."/>
            <person name="Hicks J.W."/>
            <person name="Kim Y.S."/>
        </authorList>
    </citation>
    <scope>NUCLEOTIDE SEQUENCE [GENOMIC DNA] OF 1-31</scope>
</reference>
<reference key="12">
    <citation type="journal article" date="1991" name="Gastroenterology">
        <title>Expression of sucrase-isomaltase and dipeptidylpeptidase IV in human small intestine and colon.</title>
        <authorList>
            <person name="Gorvel J.P."/>
            <person name="Ferrero A."/>
            <person name="Chambraud L."/>
            <person name="Rigal A."/>
            <person name="Bonicel J."/>
            <person name="Maroux S."/>
        </authorList>
    </citation>
    <scope>PROTEIN SEQUENCE OF 1-22</scope>
    <scope>TISSUE SPECIFICITY</scope>
</reference>
<reference key="13">
    <citation type="journal article" date="2000" name="Eur. J. Biochem.">
        <title>Molecular characterization of dipeptidyl peptidase activity in serum: soluble CD26/dipeptidyl peptidase IV is responsible for the release of X-Pro dipeptides.</title>
        <authorList>
            <person name="Durinx C."/>
            <person name="Lambeir A.M."/>
            <person name="Bosmans E."/>
            <person name="Falmagne J.B."/>
            <person name="Berghmans R."/>
            <person name="Haemers A."/>
            <person name="Scharpe S."/>
            <person name="De Meester I."/>
        </authorList>
    </citation>
    <scope>PROTEIN SEQUENCE OF 29-34 AND 39-43</scope>
    <scope>FUNCTION</scope>
    <scope>INTERACTION WITH ADA</scope>
    <scope>SUBCELLULAR LOCATION</scope>
</reference>
<reference key="14">
    <citation type="journal article" date="2007" name="Proteomics">
        <title>The Simpson-Golabi-Behmel syndrome causative glypican-3, binds to and inhibits the dipeptidyl peptidase activity of CD26.</title>
        <authorList>
            <person name="Davoodi J."/>
            <person name="Kelly J."/>
            <person name="Gendron N.H."/>
            <person name="MacKenzie A.E."/>
        </authorList>
    </citation>
    <scope>PROTEIN SEQUENCE OF 659-669</scope>
    <scope>FUNCTION</scope>
    <scope>ACTIVITY REGULATION</scope>
    <scope>INTERACTION WITH GPC3</scope>
    <scope>IDENTIFICATION BY MASS SPECTROMETRY</scope>
</reference>
<reference key="15">
    <citation type="journal article" date="1993" name="J. Exp. Med.">
        <title>A marker for neoplastic progression of human melanocytes is a cell surface ectopeptidase.</title>
        <authorList>
            <person name="Morrison M.E."/>
            <person name="Vijayasaradhi S."/>
            <person name="Engelstein D."/>
            <person name="Albino A.P."/>
            <person name="Houghton A.N."/>
        </authorList>
    </citation>
    <scope>PARTIAL PROTEIN SEQUENCE</scope>
    <source>
        <tissue>Kidney</tissue>
    </source>
</reference>
<reference key="16">
    <citation type="journal article" date="1993" name="Science">
        <title>Direct association of adenosine deaminase with a T cell activation antigen, CD26.</title>
        <authorList>
            <person name="Kameoka J."/>
            <person name="Tanaka T."/>
            <person name="Nojima Y."/>
            <person name="Schlossman S.F."/>
            <person name="Morimoto C."/>
        </authorList>
    </citation>
    <scope>INTERACTION WITH ADA</scope>
    <scope>SUBCELLULAR LOCATION</scope>
</reference>
<reference key="17">
    <citation type="journal article" date="1994" name="Eur. J. Immunol.">
        <title>Binding of adenosine deaminase to the lymphocyte surface via CD26.</title>
        <authorList>
            <person name="De Meester I."/>
            <person name="Vanham G."/>
            <person name="Kestens L."/>
            <person name="Vanhoof G."/>
            <person name="Bosmans E."/>
            <person name="Gigase P."/>
            <person name="Scharpe S."/>
        </authorList>
    </citation>
    <scope>INTERACTION WITH ADA</scope>
</reference>
<reference key="18">
    <citation type="journal article" date="1995" name="Biochem. Biophys. Res. Commun.">
        <title>The cysteine-rich region of dipeptidyl peptidase IV (CD 26) is the collagen-binding site.</title>
        <authorList>
            <person name="Loster K."/>
            <person name="Zeilinger K."/>
            <person name="Schuppan D."/>
            <person name="Reutter W."/>
        </authorList>
    </citation>
    <scope>ASSOCIATION WITH COLLAGEN</scope>
</reference>
<reference key="19">
    <citation type="journal article" date="1997" name="Immunobiology">
        <title>Interleukin-12 enhances CD26 expression and dipeptidyl peptidase IV function on human activated lymphocytes.</title>
        <authorList>
            <person name="Cordero O.J."/>
            <person name="Salgado F.J."/>
            <person name="Vinuela J.E."/>
            <person name="Nogueira M."/>
        </authorList>
    </citation>
    <scope>INDUCTION</scope>
</reference>
<reference key="20">
    <citation type="journal article" date="1999" name="FEBS Lett.">
        <title>Two highly conserved glutamic acid residues in the predicted beta propeller domain of dipeptidyl peptidase IV are required for its enzyme activity.</title>
        <authorList>
            <person name="Abbott C.A."/>
            <person name="McCaughan G.W."/>
            <person name="Gorrell M.D."/>
        </authorList>
    </citation>
    <scope>FUNCTION</scope>
    <scope>MUTAGENESIS OF GLU-205 AND GLU-206</scope>
</reference>
<reference key="21">
    <citation type="journal article" date="1999" name="J. Biol. Chem.">
        <title>Fibroblast activation protein, a dual specificity serine protease expressed in reactive human tumor stromal fibroblasts.</title>
        <authorList>
            <person name="Park J.E."/>
            <person name="Lenter M.C."/>
            <person name="Zimmermann R.N."/>
            <person name="Garin-Chesa P."/>
            <person name="Old L.J."/>
            <person name="Rettig W.J."/>
        </authorList>
    </citation>
    <scope>FUNCTION</scope>
    <scope>CATALYTIC ACTIVITY</scope>
</reference>
<reference key="22">
    <citation type="journal article" date="2000" name="Br. J. Cancer">
        <title>Preoperative serum CD26 levels: diagnostic efficiency and predictive value for colorectal cancer.</title>
        <authorList>
            <person name="Cordero O.J."/>
            <person name="Ayude D."/>
            <person name="Nogueira M."/>
            <person name="Rodriguez-Berrocal F.J."/>
            <person name="de la Cadena M.P."/>
        </authorList>
    </citation>
    <scope>ASSOCIATION WITH CANCER</scope>
</reference>
<reference key="23">
    <citation type="journal article" date="2000" name="Cytokine">
        <title>Mechanisms of CD26/dipeptidyl peptidase IV cytokine-dependent regulation on human activated lymphocytes.</title>
        <authorList>
            <person name="Salgado F.J."/>
            <person name="Vela E."/>
            <person name="Martin M."/>
            <person name="Franco R."/>
            <person name="Nogueira M."/>
            <person name="Cordero O.J."/>
        </authorList>
    </citation>
    <scope>INDUCTION</scope>
</reference>
<reference key="24">
    <citation type="journal article" date="2000" name="Proc. Natl. Acad. Sci. U.S.A.">
        <title>Internalization of CD26 by mannose 6-phosphate/insulin-like growth factor II receptor contributes to T cell activation.</title>
        <authorList>
            <person name="Ikushima H."/>
            <person name="Munakata Y."/>
            <person name="Ishii T."/>
            <person name="Iwata S."/>
            <person name="Terashima M."/>
            <person name="Tanaka H."/>
            <person name="Schlossman S.F."/>
            <person name="Morimoto C."/>
        </authorList>
    </citation>
    <scope>FUNCTION</scope>
    <scope>INTERACTION WITH IGF2R</scope>
    <scope>GLYCOSYLATION</scope>
    <scope>PHOSPHORYLATION</scope>
    <scope>SUBCELLULAR LOCATION</scope>
</reference>
<reference key="25">
    <citation type="journal article" date="2002" name="Biochem. J.">
        <title>Regulation of epithelial and lymphocyte cell adhesion by adenosine deaminase-CD26 interaction.</title>
        <authorList>
            <person name="Gines S."/>
            <person name="Marino M."/>
            <person name="Mallol J."/>
            <person name="Canela E.I."/>
            <person name="Morimoto C."/>
            <person name="Callebaut C."/>
            <person name="Hovanessian A."/>
            <person name="Casado V."/>
            <person name="Lluis C."/>
            <person name="Franco R."/>
        </authorList>
    </citation>
    <scope>FUNCTION</scope>
    <scope>SUBCELLULAR LOCATION</scope>
</reference>
<reference key="26">
    <citation type="journal article" date="2002" name="J. Biol. Chem.">
        <title>Intestinal dipeptidyl peptidase IV is efficiently sorted to the apical membrane through the concerted action of N- and O-glycans as well as association with lipid microdomains.</title>
        <authorList>
            <person name="Alfalah M."/>
            <person name="Jacob R."/>
            <person name="Naim H.Y."/>
        </authorList>
    </citation>
    <scope>GLYCOSYLATION</scope>
    <scope>SUBCELLULAR LOCATION</scope>
</reference>
<reference key="27">
    <citation type="journal article" date="2003" name="J. Biol. Chem.">
        <title>A role for interleukin-12 in the regulation of T cell plasma membrane compartmentation.</title>
        <authorList>
            <person name="Salgado F.J."/>
            <person name="Lojo J."/>
            <person name="Alonso-Lebrero J.L."/>
            <person name="Lluis C."/>
            <person name="Franco R."/>
            <person name="Cordero O.J."/>
            <person name="Nogueira M."/>
        </authorList>
    </citation>
    <scope>INTERACTION WITH PTPRC</scope>
    <scope>INDUCTION</scope>
    <scope>SUBCELLULAR LOCATION</scope>
</reference>
<reference key="28">
    <citation type="journal article" date="2004" name="J. Biol. Chem.">
        <title>Cell surface adenosine deaminase binds and stimulates plasminogen activation on 1-LN human prostate cancer cells.</title>
        <authorList>
            <person name="Gonzalez-Gronow M."/>
            <person name="Hershfield M.S."/>
            <person name="Arredondo-Vega F.X."/>
            <person name="Pizzo S.V."/>
        </authorList>
    </citation>
    <scope>INTERACTION WITH ADA</scope>
</reference>
<reference key="29">
    <citation type="journal article" date="2004" name="J. Biol. Chem.">
        <title>One site mutation disrupts dimer formation in human DPP-IV proteins.</title>
        <authorList>
            <person name="Chien C.H."/>
            <person name="Huang L.H."/>
            <person name="Chou C.Y."/>
            <person name="Chen Y.S."/>
            <person name="Han Y.S."/>
            <person name="Chang G.G."/>
            <person name="Liang P.H."/>
            <person name="Chen X."/>
        </authorList>
    </citation>
    <scope>HOMODIMERIZATION</scope>
    <scope>MUTAGENESIS OF HIS-750</scope>
</reference>
<reference key="30">
    <citation type="journal article" date="2004" name="Protein Sci.">
        <title>N-linked glycosylation of dipeptidyl peptidase IV (CD26): effects on enzyme activity, homodimer formation, and adenosine deaminase binding.</title>
        <authorList>
            <person name="Aertgeerts K."/>
            <person name="Ye S."/>
            <person name="Shi L."/>
            <person name="Prasad S.G."/>
            <person name="Witmer D."/>
            <person name="Chi E."/>
            <person name="Sang B.C."/>
            <person name="Wijnands R.A."/>
            <person name="Webb D.R."/>
            <person name="Swanson R.V."/>
        </authorList>
    </citation>
    <scope>FUNCTION</scope>
    <scope>INTERACTION WITH ADA</scope>
    <scope>MUTAGENESIS OF ASN-85; ASN-92; ASN-150; ASN-219; ASN-229; ASN-281; ASN-321; ASN-520 AND ASN-685</scope>
</reference>
<reference key="31">
    <citation type="journal article" date="2005" name="J. Proteome Res.">
        <title>Human plasma N-glycoproteome analysis by immunoaffinity subtraction, hydrazide chemistry, and mass spectrometry.</title>
        <authorList>
            <person name="Liu T."/>
            <person name="Qian W.-J."/>
            <person name="Gritsenko M.A."/>
            <person name="Camp D.G. II"/>
            <person name="Monroe M.E."/>
            <person name="Moore R.J."/>
            <person name="Smith R.D."/>
        </authorList>
    </citation>
    <scope>GLYCOSYLATION [LARGE SCALE ANALYSIS] AT ASN-520 AND ASN-685</scope>
    <source>
        <tissue>Plasma</tissue>
    </source>
</reference>
<reference key="32">
    <citation type="journal article" date="2006" name="Blood">
        <title>Endothelial catabolism of extracellular adenosine during hypoxia: the role of surface adenosine deaminase and CD26.</title>
        <authorList>
            <person name="Eltzschig H.K."/>
            <person name="Faigle M."/>
            <person name="Knapp S."/>
            <person name="Karhausen J."/>
            <person name="Ibla J."/>
            <person name="Rosenberger P."/>
            <person name="Odegard K.C."/>
            <person name="Laussen P.C."/>
            <person name="Thompson L.F."/>
            <person name="Colgan S.P."/>
        </authorList>
    </citation>
    <scope>INDUCTION BY HYPOXIA</scope>
</reference>
<reference key="33">
    <citation type="journal article" date="2006" name="Cancer Res.">
        <title>The protease complex consisting of dipeptidyl peptidase IV and seprase plays a role in the migration and invasion of human endothelial cells in collagenous matrices.</title>
        <authorList>
            <person name="Ghersi G."/>
            <person name="Zhao Q."/>
            <person name="Salamone M."/>
            <person name="Yeh Y."/>
            <person name="Zucker S."/>
            <person name="Chen W.T."/>
        </authorList>
    </citation>
    <scope>FUNCTION</scope>
    <scope>HETERODIMERIZATION</scope>
    <scope>INDUCTION</scope>
    <scope>SUBCELLULAR LOCATION</scope>
</reference>
<reference key="34">
    <citation type="journal article" date="2006" name="Clin. Chem.">
        <title>Dipeptidyl-peptidase IV converts intact B-type natriuretic peptide into its des-SerPro form.</title>
        <authorList>
            <person name="Brandt I."/>
            <person name="Lambeir A.M."/>
            <person name="Ketelslegers J.M."/>
            <person name="Vanderheyden M."/>
            <person name="Scharpe S."/>
            <person name="De Meester I."/>
        </authorList>
    </citation>
    <scope>FUNCTION</scope>
    <scope>SUBCELLULAR LOCATION</scope>
</reference>
<reference key="35">
    <citation type="journal article" date="2007" name="J. Biol. Chem.">
        <title>Caveolin-1 triggers T-cell activation via CD26 in association with CARMA1.</title>
        <authorList>
            <person name="Ohnuma K."/>
            <person name="Uchiyama M."/>
            <person name="Yamochi T."/>
            <person name="Nishibashi K."/>
            <person name="Hosono O."/>
            <person name="Takahashi N."/>
            <person name="Kina S."/>
            <person name="Tanaka H."/>
            <person name="Lin X."/>
            <person name="Dang N.H."/>
            <person name="Morimoto C."/>
        </authorList>
    </citation>
    <scope>FUNCTION</scope>
    <scope>IDENTIFICATION IN A MEMBRANE RAFT COMPLEX</scope>
    <scope>HOMODIMERIZATION</scope>
    <scope>INTERACTION WITH CARD11 AND CAV1</scope>
    <scope>SUBCELLULAR LOCATION</scope>
    <scope>MUTAGENESIS OF HIS-750</scope>
</reference>
<reference key="36">
    <citation type="journal article" date="2008" name="Exp. Cell Res.">
        <title>Lymphatic-specific expression of dipeptidyl peptidase IV and its dual role in lymphatic endothelial function.</title>
        <authorList>
            <person name="Shin J.W."/>
            <person name="Jurisic G."/>
            <person name="Detmar M."/>
        </authorList>
    </citation>
    <scope>FUNCTION</scope>
    <scope>ACTIVITY REGULATION</scope>
    <scope>TISSUE SPECIFICITY</scope>
</reference>
<reference key="37">
    <citation type="journal article" date="2009" name="Cancer Immunol. Immunother.">
        <title>On the origin of serum CD26 and its altered concentration in cancer patients.</title>
        <authorList>
            <person name="Cordero O.J."/>
            <person name="Salgado F.J."/>
            <person name="Nogueira M."/>
        </authorList>
    </citation>
    <scope>REVIEW</scope>
</reference>
<reference key="38">
    <citation type="journal article" date="2009" name="J. Proteome Res.">
        <title>Glycoproteomics analysis of human liver tissue by combination of multiple enzyme digestion and hydrazide chemistry.</title>
        <authorList>
            <person name="Chen R."/>
            <person name="Jiang X."/>
            <person name="Sun D."/>
            <person name="Han G."/>
            <person name="Wang F."/>
            <person name="Ye M."/>
            <person name="Wang L."/>
            <person name="Zou H."/>
        </authorList>
    </citation>
    <scope>GLYCOSYLATION [LARGE SCALE ANALYSIS] AT ASN-92; ASN-150; ASN-520 AND ASN-685</scope>
    <source>
        <tissue>Liver</tissue>
    </source>
</reference>
<reference key="39">
    <citation type="journal article" date="2011" name="BMC Syst. Biol.">
        <title>Initial characterization of the human central proteome.</title>
        <authorList>
            <person name="Burkard T.R."/>
            <person name="Planyavsky M."/>
            <person name="Kaupe I."/>
            <person name="Breitwieser F.P."/>
            <person name="Buerckstuemmer T."/>
            <person name="Bennett K.L."/>
            <person name="Superti-Furga G."/>
            <person name="Colinge J."/>
        </authorList>
    </citation>
    <scope>IDENTIFICATION BY MASS SPECTROMETRY [LARGE SCALE ANALYSIS]</scope>
</reference>
<reference key="40">
    <citation type="journal article" date="2013" name="Nature">
        <title>Dipeptidyl peptidase 4 is a functional receptor for the emerging human coronavirus-EMC.</title>
        <authorList>
            <person name="Raj V.S."/>
            <person name="Mou H."/>
            <person name="Smits S.L."/>
            <person name="Dekkers D.H."/>
            <person name="Muller M.A."/>
            <person name="Dijkman R."/>
            <person name="Muth D."/>
            <person name="Demmers J.A."/>
            <person name="Zaki A."/>
            <person name="Fouchier R.A."/>
            <person name="Thiel V."/>
            <person name="Drosten C."/>
            <person name="Rottier P.J."/>
            <person name="Osterhaus A.D."/>
            <person name="Bosch B.J."/>
            <person name="Haagmans B.L."/>
        </authorList>
    </citation>
    <scope>INTERACTION WITH HUMAN CORONAVIRUS-EMC SPIKE PROTEIN</scope>
</reference>
<reference key="41">
    <citation type="journal article" date="2014" name="J. Proteomics">
        <title>An enzyme assisted RP-RPLC approach for in-depth analysis of human liver phosphoproteome.</title>
        <authorList>
            <person name="Bian Y."/>
            <person name="Song C."/>
            <person name="Cheng K."/>
            <person name="Dong M."/>
            <person name="Wang F."/>
            <person name="Huang J."/>
            <person name="Sun D."/>
            <person name="Wang L."/>
            <person name="Ye M."/>
            <person name="Zou H."/>
        </authorList>
    </citation>
    <scope>IDENTIFICATION BY MASS SPECTROMETRY [LARGE SCALE ANALYSIS]</scope>
    <source>
        <tissue>Liver</tissue>
    </source>
</reference>
<reference key="42">
    <citation type="journal article" date="2003" name="Acta Crystallogr. D">
        <title>High-resolution structure of human apo dipeptidyl peptidase IV/CD26 and its complex with 1-[([2-[(5-iodopyridin-2-yl)amino]-ethyl]amino)-acetyl]-2-cyano-(S)-pyrrolidine.</title>
        <authorList>
            <person name="Oefner C."/>
            <person name="D'Arcy A."/>
            <person name="Mac Sweeney A."/>
            <person name="Pierau S."/>
            <person name="Gardiner R."/>
            <person name="Dale G.E."/>
        </authorList>
    </citation>
    <scope>X-RAY CRYSTALLOGRAPHY (1.9 ANGSTROMS) OF 38-766 IN COMPLEX WITH INHIBITOR</scope>
    <scope>HOMODIMERIZATION</scope>
</reference>
<reference key="43">
    <citation type="journal article" date="2003" name="Biochem. Biophys. Res. Commun.">
        <title>The structure and function of human dipeptidyl peptidase IV, possessing a unique eight-bladed beta-propeller fold.</title>
        <authorList>
            <person name="Hiramatsu H."/>
            <person name="Kyono K."/>
            <person name="Higashiyama Y."/>
            <person name="Fukushima C."/>
            <person name="Shima H."/>
            <person name="Sugiyama S."/>
            <person name="Inaka K."/>
            <person name="Yamamoto A."/>
            <person name="Shimizu R."/>
        </authorList>
    </citation>
    <scope>X-RAY CRYSTALLOGRAPHY (2.6 ANGSTROMS) OF 35-771</scope>
    <scope>HOMODIMERIZATION</scope>
    <scope>GLYCOSYLATION AT ASN-85; ASN-219; ASN-229; ASN-281 AND ASN-321</scope>
    <scope>DISULFIDE BONDS</scope>
</reference>
<reference key="44">
    <citation type="journal article" date="2003" name="Nat. Struct. Biol.">
        <title>Crystal structure of human dipeptidyl peptidase IV/CD26 in complex with a substrate analog.</title>
        <authorList>
            <person name="Rasmussen H.B."/>
            <person name="Branner S."/>
            <person name="Wiberg F.C."/>
            <person name="Wagtmann N."/>
        </authorList>
    </citation>
    <scope>X-RAY CRYSTALLOGRAPHY (2.5 ANGSTROMS) OF 39-766</scope>
    <scope>HOMODIMERIZATION</scope>
    <scope>GLYCOSYLATION AT ASN-85; ASN-150; ASN-219; ASN-229; ASN-281; ASN-321 AND ASN-520</scope>
    <scope>DISULFIDE BONDS</scope>
</reference>
<reference key="45">
    <citation type="journal article" date="2003" name="Structure">
        <title>Structural basis of proline-specific exopeptidase activity as observed in human dipeptidyl peptidase-IV.</title>
        <authorList>
            <person name="Thoma R."/>
            <person name="Loeffler B."/>
            <person name="Stihle M."/>
            <person name="Huber W."/>
            <person name="Ruf A."/>
            <person name="Hennig M."/>
        </authorList>
    </citation>
    <scope>X-RAY CRYSTALLOGRAPHY (2.5 ANGSTROMS) OF 39-766</scope>
    <scope>HOMODIMERIZATION</scope>
    <scope>GLYCOSYLATION AT ASN-85; ASN-150; ASN-229 AND ASN-281</scope>
    <scope>DISULFIDE BONDS</scope>
</reference>
<reference key="46">
    <citation type="journal article" date="2010" name="J. Med. Chem.">
        <title>Discovery of 6-(aminomethyl)-5-(2,4-dichlorophenyl)-7-methylimidazo[1,2-a]pyrimidine-2-carboxamides as potent, selective dipeptidyl peptidase-4 (DPP4) inhibitors.</title>
        <authorList>
            <person name="Meng W."/>
            <person name="Brigance R.P."/>
            <person name="Chao H.J."/>
            <person name="Fura A."/>
            <person name="Harrity T."/>
            <person name="Marcinkeviciene J."/>
            <person name="O'Connor S.P."/>
            <person name="Tamura J.K."/>
            <person name="Xie D."/>
            <person name="Zhang Y."/>
            <person name="Klei H.E."/>
            <person name="Kish K."/>
            <person name="Weigelt C.A."/>
            <person name="Turdi H."/>
            <person name="Wang A."/>
            <person name="Zahler R."/>
            <person name="Kirby M.S."/>
            <person name="Hamann L.G."/>
        </authorList>
    </citation>
    <scope>X-RAY CRYSTALLOGRAPHY (2.34 ANGSTROMS) OF 39-766</scope>
    <scope>GLYCOSYLATION AT ASN-85; ASN-92; ASN-150; ASN-219; ASN-229 AND ASN-520</scope>
</reference>
<reference evidence="38" key="47">
    <citation type="journal article" date="2013" name="Cell Res.">
        <title>Structure of MERS-CoV spike receptor-binding domain complexed with human receptor DPP4.</title>
        <authorList>
            <person name="Wang N."/>
            <person name="Shi X."/>
            <person name="Jiang L."/>
            <person name="Zhang S."/>
            <person name="Wang D."/>
            <person name="Tong P."/>
            <person name="Guo D."/>
            <person name="Fu L."/>
            <person name="Cui Y."/>
            <person name="Liu X."/>
            <person name="Arledge K.C."/>
            <person name="Chen Y.H."/>
            <person name="Zhang L."/>
            <person name="Wang X."/>
        </authorList>
    </citation>
    <scope>X-RAY CRYSTALLOGRAPHY (3.00 ANGSTROMS) OF 39-766 IN COMPLEX WITH MERS-COV SPIKE GLYCOPROTEIN</scope>
    <scope>GLYCOSYLATION AT ASN-85; ASN-92; ASN-150; ASN-219; ASN-229; ASN-281; ASN-321 AND ASN-520</scope>
    <scope>INTERACTION WITH MERS-COV SPIKE GLYCOPROTEIN (MICROBIAL INFECTION)</scope>
    <scope>FUNCTION (MICROBIAL INFECTION)</scope>
</reference>
<reference key="48">
    <citation type="journal article" date="2020" name="Genes (Basel)">
        <title>COVID-19 and Genetic Variants of Protein Involved in the SARS-CoV-2 Entry into the Host Cells.</title>
        <authorList>
            <person name="Latini A."/>
            <person name="Agolini E."/>
            <person name="Novelli A."/>
            <person name="Borgiani P."/>
            <person name="Giannini R."/>
            <person name="Gravina P."/>
            <person name="Smarrazzo A."/>
            <person name="Dauri M."/>
            <person name="Andreoni M."/>
            <person name="Rogliani P."/>
            <person name="Bernardini S."/>
            <person name="Helmer-Citterich M."/>
            <person name="Biancolella M."/>
            <person name="Novelli G."/>
        </authorList>
    </citation>
    <scope>VARIANT ILE-266</scope>
</reference>
<name>DPP4_HUMAN</name>
<evidence type="ECO:0000255" key="1"/>
<evidence type="ECO:0000255" key="2">
    <source>
        <dbReference type="PROSITE-ProRule" id="PRU10084"/>
    </source>
</evidence>
<evidence type="ECO:0000269" key="3">
    <source>
    </source>
</evidence>
<evidence type="ECO:0000269" key="4">
    <source>
    </source>
</evidence>
<evidence type="ECO:0000269" key="5">
    <source>
    </source>
</evidence>
<evidence type="ECO:0000269" key="6">
    <source>
    </source>
</evidence>
<evidence type="ECO:0000269" key="7">
    <source>
    </source>
</evidence>
<evidence type="ECO:0000269" key="8">
    <source>
    </source>
</evidence>
<evidence type="ECO:0000269" key="9">
    <source>
    </source>
</evidence>
<evidence type="ECO:0000269" key="10">
    <source>
    </source>
</evidence>
<evidence type="ECO:0000269" key="11">
    <source>
    </source>
</evidence>
<evidence type="ECO:0000269" key="12">
    <source>
    </source>
</evidence>
<evidence type="ECO:0000269" key="13">
    <source>
    </source>
</evidence>
<evidence type="ECO:0000269" key="14">
    <source>
    </source>
</evidence>
<evidence type="ECO:0000269" key="15">
    <source>
    </source>
</evidence>
<evidence type="ECO:0000269" key="16">
    <source>
    </source>
</evidence>
<evidence type="ECO:0000269" key="17">
    <source>
    </source>
</evidence>
<evidence type="ECO:0000269" key="18">
    <source>
    </source>
</evidence>
<evidence type="ECO:0000269" key="19">
    <source>
    </source>
</evidence>
<evidence type="ECO:0000269" key="20">
    <source>
    </source>
</evidence>
<evidence type="ECO:0000269" key="21">
    <source>
    </source>
</evidence>
<evidence type="ECO:0000269" key="22">
    <source>
    </source>
</evidence>
<evidence type="ECO:0000269" key="23">
    <source>
    </source>
</evidence>
<evidence type="ECO:0000269" key="24">
    <source>
    </source>
</evidence>
<evidence type="ECO:0000269" key="25">
    <source>
    </source>
</evidence>
<evidence type="ECO:0000269" key="26">
    <source>
    </source>
</evidence>
<evidence type="ECO:0000269" key="27">
    <source>
    </source>
</evidence>
<evidence type="ECO:0000269" key="28">
    <source>
    </source>
</evidence>
<evidence type="ECO:0000269" key="29">
    <source>
    </source>
</evidence>
<evidence type="ECO:0000269" key="30">
    <source>
    </source>
</evidence>
<evidence type="ECO:0000269" key="31">
    <source>
    </source>
</evidence>
<evidence type="ECO:0000269" key="32">
    <source>
    </source>
</evidence>
<evidence type="ECO:0000269" key="33">
    <source>
    </source>
</evidence>
<evidence type="ECO:0000269" key="34">
    <source>
    </source>
</evidence>
<evidence type="ECO:0000305" key="35"/>
<evidence type="ECO:0000305" key="36">
    <source>
    </source>
</evidence>
<evidence type="ECO:0000312" key="37">
    <source>
        <dbReference type="HGNC" id="HGNC:3009"/>
    </source>
</evidence>
<evidence type="ECO:0007744" key="38">
    <source>
        <dbReference type="PDB" id="4L72"/>
    </source>
</evidence>
<evidence type="ECO:0007829" key="39">
    <source>
        <dbReference type="PDB" id="1NU8"/>
    </source>
</evidence>
<evidence type="ECO:0007829" key="40">
    <source>
        <dbReference type="PDB" id="1PFQ"/>
    </source>
</evidence>
<evidence type="ECO:0007829" key="41">
    <source>
        <dbReference type="PDB" id="2G5P"/>
    </source>
</evidence>
<evidence type="ECO:0007829" key="42">
    <source>
        <dbReference type="PDB" id="3F8S"/>
    </source>
</evidence>
<evidence type="ECO:0007829" key="43">
    <source>
        <dbReference type="PDB" id="3G0B"/>
    </source>
</evidence>
<evidence type="ECO:0007829" key="44">
    <source>
        <dbReference type="PDB" id="3SWW"/>
    </source>
</evidence>
<evidence type="ECO:0007829" key="45">
    <source>
        <dbReference type="PDB" id="3VJK"/>
    </source>
</evidence>
<evidence type="ECO:0007829" key="46">
    <source>
        <dbReference type="PDB" id="3VJM"/>
    </source>
</evidence>
<evidence type="ECO:0007829" key="47">
    <source>
        <dbReference type="PDB" id="4A5S"/>
    </source>
</evidence>
<evidence type="ECO:0007829" key="48">
    <source>
        <dbReference type="PDB" id="4N8D"/>
    </source>
</evidence>
<evidence type="ECO:0007829" key="49">
    <source>
        <dbReference type="PDB" id="5T4B"/>
    </source>
</evidence>
<evidence type="ECO:0007829" key="50">
    <source>
        <dbReference type="PDB" id="5Y7J"/>
    </source>
</evidence>
<evidence type="ECO:0007829" key="51">
    <source>
        <dbReference type="PDB" id="8WKU"/>
    </source>
</evidence>
<dbReference type="EC" id="3.4.14.5" evidence="4"/>
<dbReference type="EMBL" id="X60708">
    <property type="protein sequence ID" value="CAA43118.1"/>
    <property type="molecule type" value="mRNA"/>
</dbReference>
<dbReference type="EMBL" id="M80536">
    <property type="protein sequence ID" value="AAA52308.1"/>
    <property type="molecule type" value="mRNA"/>
</dbReference>
<dbReference type="EMBL" id="M74777">
    <property type="protein sequence ID" value="AAA51943.1"/>
    <property type="molecule type" value="mRNA"/>
</dbReference>
<dbReference type="EMBL" id="U13735">
    <property type="protein sequence ID" value="AAB60646.1"/>
    <property type="molecule type" value="Genomic_DNA"/>
</dbReference>
<dbReference type="EMBL" id="U13710">
    <property type="protein sequence ID" value="AAB60646.1"/>
    <property type="status" value="JOINED"/>
    <property type="molecule type" value="Genomic_DNA"/>
</dbReference>
<dbReference type="EMBL" id="U13711">
    <property type="protein sequence ID" value="AAB60646.1"/>
    <property type="status" value="JOINED"/>
    <property type="molecule type" value="Genomic_DNA"/>
</dbReference>
<dbReference type="EMBL" id="U13712">
    <property type="protein sequence ID" value="AAB60646.1"/>
    <property type="status" value="JOINED"/>
    <property type="molecule type" value="Genomic_DNA"/>
</dbReference>
<dbReference type="EMBL" id="U13713">
    <property type="protein sequence ID" value="AAB60646.1"/>
    <property type="status" value="JOINED"/>
    <property type="molecule type" value="Genomic_DNA"/>
</dbReference>
<dbReference type="EMBL" id="U13714">
    <property type="protein sequence ID" value="AAB60646.1"/>
    <property type="status" value="JOINED"/>
    <property type="molecule type" value="Genomic_DNA"/>
</dbReference>
<dbReference type="EMBL" id="U13715">
    <property type="protein sequence ID" value="AAB60646.1"/>
    <property type="status" value="JOINED"/>
    <property type="molecule type" value="Genomic_DNA"/>
</dbReference>
<dbReference type="EMBL" id="U13716">
    <property type="protein sequence ID" value="AAB60646.1"/>
    <property type="status" value="JOINED"/>
    <property type="molecule type" value="Genomic_DNA"/>
</dbReference>
<dbReference type="EMBL" id="U13717">
    <property type="protein sequence ID" value="AAB60646.1"/>
    <property type="status" value="JOINED"/>
    <property type="molecule type" value="Genomic_DNA"/>
</dbReference>
<dbReference type="EMBL" id="U13718">
    <property type="protein sequence ID" value="AAB60646.1"/>
    <property type="status" value="JOINED"/>
    <property type="molecule type" value="Genomic_DNA"/>
</dbReference>
<dbReference type="EMBL" id="U13719">
    <property type="protein sequence ID" value="AAB60646.1"/>
    <property type="status" value="JOINED"/>
    <property type="molecule type" value="Genomic_DNA"/>
</dbReference>
<dbReference type="EMBL" id="U13720">
    <property type="protein sequence ID" value="AAB60646.1"/>
    <property type="status" value="JOINED"/>
    <property type="molecule type" value="Genomic_DNA"/>
</dbReference>
<dbReference type="EMBL" id="U13721">
    <property type="protein sequence ID" value="AAB60646.1"/>
    <property type="status" value="JOINED"/>
    <property type="molecule type" value="Genomic_DNA"/>
</dbReference>
<dbReference type="EMBL" id="U13722">
    <property type="protein sequence ID" value="AAB60646.1"/>
    <property type="status" value="JOINED"/>
    <property type="molecule type" value="Genomic_DNA"/>
</dbReference>
<dbReference type="EMBL" id="U13723">
    <property type="protein sequence ID" value="AAB60646.1"/>
    <property type="status" value="JOINED"/>
    <property type="molecule type" value="Genomic_DNA"/>
</dbReference>
<dbReference type="EMBL" id="U13724">
    <property type="protein sequence ID" value="AAB60646.1"/>
    <property type="status" value="JOINED"/>
    <property type="molecule type" value="Genomic_DNA"/>
</dbReference>
<dbReference type="EMBL" id="U13725">
    <property type="protein sequence ID" value="AAB60646.1"/>
    <property type="status" value="JOINED"/>
    <property type="molecule type" value="Genomic_DNA"/>
</dbReference>
<dbReference type="EMBL" id="U13726">
    <property type="protein sequence ID" value="AAB60646.1"/>
    <property type="status" value="JOINED"/>
    <property type="molecule type" value="Genomic_DNA"/>
</dbReference>
<dbReference type="EMBL" id="U13727">
    <property type="protein sequence ID" value="AAB60646.1"/>
    <property type="status" value="JOINED"/>
    <property type="molecule type" value="Genomic_DNA"/>
</dbReference>
<dbReference type="EMBL" id="U13728">
    <property type="protein sequence ID" value="AAB60646.1"/>
    <property type="status" value="JOINED"/>
    <property type="molecule type" value="Genomic_DNA"/>
</dbReference>
<dbReference type="EMBL" id="U13729">
    <property type="protein sequence ID" value="AAB60646.1"/>
    <property type="status" value="JOINED"/>
    <property type="molecule type" value="Genomic_DNA"/>
</dbReference>
<dbReference type="EMBL" id="U13730">
    <property type="protein sequence ID" value="AAB60646.1"/>
    <property type="status" value="JOINED"/>
    <property type="molecule type" value="Genomic_DNA"/>
</dbReference>
<dbReference type="EMBL" id="U13731">
    <property type="protein sequence ID" value="AAB60646.1"/>
    <property type="status" value="JOINED"/>
    <property type="molecule type" value="Genomic_DNA"/>
</dbReference>
<dbReference type="EMBL" id="U13732">
    <property type="protein sequence ID" value="AAB60646.1"/>
    <property type="status" value="JOINED"/>
    <property type="molecule type" value="Genomic_DNA"/>
</dbReference>
<dbReference type="EMBL" id="U13733">
    <property type="protein sequence ID" value="AAB60646.1"/>
    <property type="status" value="JOINED"/>
    <property type="molecule type" value="Genomic_DNA"/>
</dbReference>
<dbReference type="EMBL" id="U13734">
    <property type="protein sequence ID" value="AAB60646.1"/>
    <property type="status" value="JOINED"/>
    <property type="molecule type" value="Genomic_DNA"/>
</dbReference>
<dbReference type="EMBL" id="AB451339">
    <property type="protein sequence ID" value="BAG70153.1"/>
    <property type="molecule type" value="mRNA"/>
</dbReference>
<dbReference type="EMBL" id="AB451488">
    <property type="protein sequence ID" value="BAG70302.1"/>
    <property type="molecule type" value="mRNA"/>
</dbReference>
<dbReference type="EMBL" id="AC008063">
    <property type="protein sequence ID" value="AAX93179.1"/>
    <property type="molecule type" value="Genomic_DNA"/>
</dbReference>
<dbReference type="EMBL" id="CH471058">
    <property type="protein sequence ID" value="EAX11361.1"/>
    <property type="molecule type" value="Genomic_DNA"/>
</dbReference>
<dbReference type="EMBL" id="BC013329">
    <property type="protein sequence ID" value="AAH13329.2"/>
    <property type="molecule type" value="mRNA"/>
</dbReference>
<dbReference type="EMBL" id="BC065265">
    <property type="protein sequence ID" value="AAH65265.1"/>
    <property type="molecule type" value="mRNA"/>
</dbReference>
<dbReference type="EMBL" id="S79876">
    <property type="protein sequence ID" value="AAB35614.1"/>
    <property type="molecule type" value="Genomic_DNA"/>
</dbReference>
<dbReference type="CCDS" id="CCDS2216.1"/>
<dbReference type="PIR" id="S24313">
    <property type="entry name" value="CDHU26"/>
</dbReference>
<dbReference type="RefSeq" id="NP_001926.2">
    <property type="nucleotide sequence ID" value="NM_001935.3"/>
</dbReference>
<dbReference type="PDB" id="1J2E">
    <property type="method" value="X-ray"/>
    <property type="resolution" value="2.60 A"/>
    <property type="chains" value="A/B=33-766"/>
</dbReference>
<dbReference type="PDB" id="1N1M">
    <property type="method" value="X-ray"/>
    <property type="resolution" value="2.50 A"/>
    <property type="chains" value="A/B=39-766"/>
</dbReference>
<dbReference type="PDB" id="1NU6">
    <property type="method" value="X-ray"/>
    <property type="resolution" value="2.10 A"/>
    <property type="chains" value="A/B=39-766"/>
</dbReference>
<dbReference type="PDB" id="1NU8">
    <property type="method" value="X-ray"/>
    <property type="resolution" value="2.50 A"/>
    <property type="chains" value="A/B=39-766"/>
</dbReference>
<dbReference type="PDB" id="1PFQ">
    <property type="method" value="X-ray"/>
    <property type="resolution" value="1.90 A"/>
    <property type="chains" value="A/B=36-766"/>
</dbReference>
<dbReference type="PDB" id="1R9M">
    <property type="method" value="X-ray"/>
    <property type="resolution" value="2.10 A"/>
    <property type="chains" value="A/B/C/D=39-766"/>
</dbReference>
<dbReference type="PDB" id="1R9N">
    <property type="method" value="X-ray"/>
    <property type="resolution" value="2.30 A"/>
    <property type="chains" value="A/B/C/D=39-766"/>
</dbReference>
<dbReference type="PDB" id="1RWQ">
    <property type="method" value="X-ray"/>
    <property type="resolution" value="2.20 A"/>
    <property type="chains" value="A/B=39-766"/>
</dbReference>
<dbReference type="PDB" id="1TK3">
    <property type="method" value="X-ray"/>
    <property type="resolution" value="2.00 A"/>
    <property type="chains" value="A/B=39-766"/>
</dbReference>
<dbReference type="PDB" id="1TKR">
    <property type="method" value="X-ray"/>
    <property type="resolution" value="2.70 A"/>
    <property type="chains" value="A/B=39-766"/>
</dbReference>
<dbReference type="PDB" id="1U8E">
    <property type="method" value="X-ray"/>
    <property type="resolution" value="2.20 A"/>
    <property type="chains" value="A/B=39-766"/>
</dbReference>
<dbReference type="PDB" id="1W1I">
    <property type="method" value="X-ray"/>
    <property type="resolution" value="3.03 A"/>
    <property type="chains" value="A/B/C/D=39-766"/>
</dbReference>
<dbReference type="PDB" id="1WCY">
    <property type="method" value="X-ray"/>
    <property type="resolution" value="2.20 A"/>
    <property type="chains" value="A/B=33-766"/>
</dbReference>
<dbReference type="PDB" id="1X70">
    <property type="method" value="X-ray"/>
    <property type="resolution" value="2.10 A"/>
    <property type="chains" value="A/B=39-766"/>
</dbReference>
<dbReference type="PDB" id="2AJL">
    <property type="method" value="X-ray"/>
    <property type="resolution" value="2.50 A"/>
    <property type="chains" value="I/J=39-766"/>
</dbReference>
<dbReference type="PDB" id="2BGN">
    <property type="method" value="X-ray"/>
    <property type="resolution" value="3.15 A"/>
    <property type="chains" value="A/B/C/D=39-766"/>
</dbReference>
<dbReference type="PDB" id="2BGR">
    <property type="method" value="X-ray"/>
    <property type="resolution" value="2.00 A"/>
    <property type="chains" value="A/B=29-766"/>
</dbReference>
<dbReference type="PDB" id="2BUB">
    <property type="method" value="X-ray"/>
    <property type="resolution" value="2.66 A"/>
    <property type="chains" value="A/B=39-766"/>
</dbReference>
<dbReference type="PDB" id="2FJP">
    <property type="method" value="X-ray"/>
    <property type="resolution" value="2.40 A"/>
    <property type="chains" value="A/B=39-766"/>
</dbReference>
<dbReference type="PDB" id="2G5P">
    <property type="method" value="X-ray"/>
    <property type="resolution" value="2.40 A"/>
    <property type="chains" value="A/B=39-764"/>
</dbReference>
<dbReference type="PDB" id="2G5T">
    <property type="method" value="X-ray"/>
    <property type="resolution" value="2.30 A"/>
    <property type="chains" value="A/B=39-764"/>
</dbReference>
<dbReference type="PDB" id="2G63">
    <property type="method" value="X-ray"/>
    <property type="resolution" value="2.00 A"/>
    <property type="chains" value="A/B/C/D=39-764"/>
</dbReference>
<dbReference type="PDB" id="2HHA">
    <property type="method" value="X-ray"/>
    <property type="resolution" value="2.35 A"/>
    <property type="chains" value="A/B=40-766"/>
</dbReference>
<dbReference type="PDB" id="2I03">
    <property type="method" value="X-ray"/>
    <property type="resolution" value="2.40 A"/>
    <property type="chains" value="A/B/C/D=39-764"/>
</dbReference>
<dbReference type="PDB" id="2I78">
    <property type="method" value="X-ray"/>
    <property type="resolution" value="2.50 A"/>
    <property type="chains" value="A/B/C/D=39-764"/>
</dbReference>
<dbReference type="PDB" id="2IIT">
    <property type="method" value="X-ray"/>
    <property type="resolution" value="2.35 A"/>
    <property type="chains" value="A/B=39-766"/>
</dbReference>
<dbReference type="PDB" id="2IIV">
    <property type="method" value="X-ray"/>
    <property type="resolution" value="2.15 A"/>
    <property type="chains" value="A/B=39-766"/>
</dbReference>
<dbReference type="PDB" id="2JID">
    <property type="method" value="X-ray"/>
    <property type="resolution" value="2.80 A"/>
    <property type="chains" value="A/B=31-766"/>
</dbReference>
<dbReference type="PDB" id="2OAG">
    <property type="method" value="X-ray"/>
    <property type="resolution" value="2.30 A"/>
    <property type="chains" value="A/B/C/D=39-764"/>
</dbReference>
<dbReference type="PDB" id="2OGZ">
    <property type="method" value="X-ray"/>
    <property type="resolution" value="2.10 A"/>
    <property type="chains" value="A/B=39-766"/>
</dbReference>
<dbReference type="PDB" id="2OLE">
    <property type="method" value="X-ray"/>
    <property type="resolution" value="2.40 A"/>
    <property type="chains" value="A/B=39-766"/>
</dbReference>
<dbReference type="PDB" id="2ONC">
    <property type="method" value="X-ray"/>
    <property type="resolution" value="2.55 A"/>
    <property type="chains" value="A/B/C/D=41-766"/>
</dbReference>
<dbReference type="PDB" id="2OPH">
    <property type="method" value="X-ray"/>
    <property type="resolution" value="2.40 A"/>
    <property type="chains" value="A/B=39-766"/>
</dbReference>
<dbReference type="PDB" id="2OQI">
    <property type="method" value="X-ray"/>
    <property type="resolution" value="2.80 A"/>
    <property type="chains" value="A/B/C/D=39-766"/>
</dbReference>
<dbReference type="PDB" id="2OQV">
    <property type="method" value="X-ray"/>
    <property type="resolution" value="2.80 A"/>
    <property type="chains" value="A/B=39-764"/>
</dbReference>
<dbReference type="PDB" id="2P8S">
    <property type="method" value="X-ray"/>
    <property type="resolution" value="2.20 A"/>
    <property type="chains" value="A/B=40-766"/>
</dbReference>
<dbReference type="PDB" id="2QJR">
    <property type="method" value="X-ray"/>
    <property type="resolution" value="2.20 A"/>
    <property type="chains" value="A/B=31-766"/>
</dbReference>
<dbReference type="PDB" id="2QKY">
    <property type="method" value="X-ray"/>
    <property type="resolution" value="3.10 A"/>
    <property type="chains" value="A/B/C/D=40-766"/>
</dbReference>
<dbReference type="PDB" id="2QOE">
    <property type="method" value="X-ray"/>
    <property type="resolution" value="2.30 A"/>
    <property type="chains" value="A/B=39-766"/>
</dbReference>
<dbReference type="PDB" id="2QT9">
    <property type="method" value="X-ray"/>
    <property type="resolution" value="2.10 A"/>
    <property type="chains" value="A/B=1-766"/>
</dbReference>
<dbReference type="PDB" id="2QTB">
    <property type="method" value="X-ray"/>
    <property type="resolution" value="2.25 A"/>
    <property type="chains" value="A/B=1-766"/>
</dbReference>
<dbReference type="PDB" id="2RGU">
    <property type="method" value="X-ray"/>
    <property type="resolution" value="2.60 A"/>
    <property type="chains" value="A/B=39-766"/>
</dbReference>
<dbReference type="PDB" id="2RIP">
    <property type="method" value="X-ray"/>
    <property type="resolution" value="2.90 A"/>
    <property type="chains" value="A=38-766"/>
</dbReference>
<dbReference type="PDB" id="3BJM">
    <property type="method" value="X-ray"/>
    <property type="resolution" value="2.35 A"/>
    <property type="chains" value="A/B=39-766"/>
</dbReference>
<dbReference type="PDB" id="3C43">
    <property type="method" value="X-ray"/>
    <property type="resolution" value="2.30 A"/>
    <property type="chains" value="A/B=39-766"/>
</dbReference>
<dbReference type="PDB" id="3C45">
    <property type="method" value="X-ray"/>
    <property type="resolution" value="2.05 A"/>
    <property type="chains" value="A/B=39-766"/>
</dbReference>
<dbReference type="PDB" id="3CCB">
    <property type="method" value="X-ray"/>
    <property type="resolution" value="2.49 A"/>
    <property type="chains" value="A/B/C/D=39-766"/>
</dbReference>
<dbReference type="PDB" id="3CCC">
    <property type="method" value="X-ray"/>
    <property type="resolution" value="2.71 A"/>
    <property type="chains" value="A/B/C/D=39-766"/>
</dbReference>
<dbReference type="PDB" id="3D4L">
    <property type="method" value="X-ray"/>
    <property type="resolution" value="2.00 A"/>
    <property type="chains" value="A/B=39-766"/>
</dbReference>
<dbReference type="PDB" id="3EIO">
    <property type="method" value="X-ray"/>
    <property type="resolution" value="2.00 A"/>
    <property type="chains" value="A/B=39-766"/>
</dbReference>
<dbReference type="PDB" id="3F8S">
    <property type="method" value="X-ray"/>
    <property type="resolution" value="2.43 A"/>
    <property type="chains" value="A/B=31-766"/>
</dbReference>
<dbReference type="PDB" id="3G0B">
    <property type="method" value="X-ray"/>
    <property type="resolution" value="2.25 A"/>
    <property type="chains" value="A/B/C/D=39-766"/>
</dbReference>
<dbReference type="PDB" id="3G0C">
    <property type="method" value="X-ray"/>
    <property type="resolution" value="2.69 A"/>
    <property type="chains" value="A/B/C/D=39-766"/>
</dbReference>
<dbReference type="PDB" id="3G0D">
    <property type="method" value="X-ray"/>
    <property type="resolution" value="2.39 A"/>
    <property type="chains" value="A/B/C/D=39-766"/>
</dbReference>
<dbReference type="PDB" id="3G0G">
    <property type="method" value="X-ray"/>
    <property type="resolution" value="2.45 A"/>
    <property type="chains" value="A/B/C/D=39-766"/>
</dbReference>
<dbReference type="PDB" id="3H0C">
    <property type="method" value="X-ray"/>
    <property type="resolution" value="2.66 A"/>
    <property type="chains" value="A/B=39-766"/>
</dbReference>
<dbReference type="PDB" id="3HAB">
    <property type="method" value="X-ray"/>
    <property type="resolution" value="2.10 A"/>
    <property type="chains" value="A/B=39-766"/>
</dbReference>
<dbReference type="PDB" id="3HAC">
    <property type="method" value="X-ray"/>
    <property type="resolution" value="2.00 A"/>
    <property type="chains" value="A/B=39-766"/>
</dbReference>
<dbReference type="PDB" id="3KWF">
    <property type="method" value="X-ray"/>
    <property type="resolution" value="2.40 A"/>
    <property type="chains" value="A/B=39-766"/>
</dbReference>
<dbReference type="PDB" id="3KWJ">
    <property type="method" value="X-ray"/>
    <property type="resolution" value="2.80 A"/>
    <property type="chains" value="A/B=39-766"/>
</dbReference>
<dbReference type="PDB" id="3NOX">
    <property type="method" value="X-ray"/>
    <property type="resolution" value="2.34 A"/>
    <property type="chains" value="A/B=39-766"/>
</dbReference>
<dbReference type="PDB" id="3O95">
    <property type="method" value="X-ray"/>
    <property type="resolution" value="2.85 A"/>
    <property type="chains" value="A/B/C/D=39-766"/>
</dbReference>
<dbReference type="PDB" id="3O9V">
    <property type="method" value="X-ray"/>
    <property type="resolution" value="2.75 A"/>
    <property type="chains" value="A/B/C/D=39-766"/>
</dbReference>
<dbReference type="PDB" id="3OC0">
    <property type="method" value="X-ray"/>
    <property type="resolution" value="2.70 A"/>
    <property type="chains" value="A/B=39-766"/>
</dbReference>
<dbReference type="PDB" id="3OPM">
    <property type="method" value="X-ray"/>
    <property type="resolution" value="2.72 A"/>
    <property type="chains" value="A/B/C/D=39-766"/>
</dbReference>
<dbReference type="PDB" id="3Q0T">
    <property type="method" value="X-ray"/>
    <property type="resolution" value="2.40 A"/>
    <property type="chains" value="A/B=39-766"/>
</dbReference>
<dbReference type="PDB" id="3Q8W">
    <property type="method" value="X-ray"/>
    <property type="resolution" value="3.64 A"/>
    <property type="chains" value="A/B=39-764"/>
</dbReference>
<dbReference type="PDB" id="3QBJ">
    <property type="method" value="X-ray"/>
    <property type="resolution" value="2.21 A"/>
    <property type="chains" value="A/B=31-766"/>
</dbReference>
<dbReference type="PDB" id="3SWW">
    <property type="method" value="X-ray"/>
    <property type="resolution" value="2.00 A"/>
    <property type="chains" value="A/B=39-766"/>
</dbReference>
<dbReference type="PDB" id="3SX4">
    <property type="method" value="X-ray"/>
    <property type="resolution" value="2.60 A"/>
    <property type="chains" value="A/B=39-766"/>
</dbReference>
<dbReference type="PDB" id="3VJK">
    <property type="method" value="X-ray"/>
    <property type="resolution" value="2.49 A"/>
    <property type="chains" value="A/B=33-766"/>
</dbReference>
<dbReference type="PDB" id="3VJL">
    <property type="method" value="X-ray"/>
    <property type="resolution" value="2.39 A"/>
    <property type="chains" value="A/B=33-766"/>
</dbReference>
<dbReference type="PDB" id="3VJM">
    <property type="method" value="X-ray"/>
    <property type="resolution" value="2.10 A"/>
    <property type="chains" value="A/B=33-766"/>
</dbReference>
<dbReference type="PDB" id="3W2T">
    <property type="method" value="X-ray"/>
    <property type="resolution" value="2.36 A"/>
    <property type="chains" value="A/B=33-766"/>
</dbReference>
<dbReference type="PDB" id="3WQH">
    <property type="method" value="X-ray"/>
    <property type="resolution" value="2.85 A"/>
    <property type="chains" value="A/B=39-766"/>
</dbReference>
<dbReference type="PDB" id="4A5S">
    <property type="method" value="X-ray"/>
    <property type="resolution" value="1.62 A"/>
    <property type="chains" value="A/B=39-766"/>
</dbReference>
<dbReference type="PDB" id="4DSA">
    <property type="method" value="X-ray"/>
    <property type="resolution" value="3.25 A"/>
    <property type="chains" value="A/B=39-766"/>
</dbReference>
<dbReference type="PDB" id="4DSZ">
    <property type="method" value="X-ray"/>
    <property type="resolution" value="3.20 A"/>
    <property type="chains" value="A/B=39-766"/>
</dbReference>
<dbReference type="PDB" id="4DTC">
    <property type="method" value="X-ray"/>
    <property type="resolution" value="3.00 A"/>
    <property type="chains" value="A/B=39-766"/>
</dbReference>
<dbReference type="PDB" id="4G1F">
    <property type="method" value="X-ray"/>
    <property type="resolution" value="2.90 A"/>
    <property type="chains" value="A/B/C/D=39-766"/>
</dbReference>
<dbReference type="PDB" id="4J3J">
    <property type="method" value="X-ray"/>
    <property type="resolution" value="3.20 A"/>
    <property type="chains" value="A/B=39-766"/>
</dbReference>
<dbReference type="PDB" id="4JH0">
    <property type="method" value="X-ray"/>
    <property type="resolution" value="2.35 A"/>
    <property type="chains" value="A/B=39-766"/>
</dbReference>
<dbReference type="PDB" id="4KR0">
    <property type="method" value="X-ray"/>
    <property type="resolution" value="2.70 A"/>
    <property type="chains" value="A=39-766"/>
</dbReference>
<dbReference type="PDB" id="4L72">
    <property type="method" value="X-ray"/>
    <property type="resolution" value="3.00 A"/>
    <property type="chains" value="A=39-766"/>
</dbReference>
<dbReference type="PDB" id="4LKO">
    <property type="method" value="X-ray"/>
    <property type="resolution" value="2.43 A"/>
    <property type="chains" value="A/B=39-766"/>
</dbReference>
<dbReference type="PDB" id="4N8D">
    <property type="method" value="X-ray"/>
    <property type="resolution" value="1.65 A"/>
    <property type="chains" value="A/B=39-766"/>
</dbReference>
<dbReference type="PDB" id="4N8E">
    <property type="method" value="X-ray"/>
    <property type="resolution" value="2.30 A"/>
    <property type="chains" value="A/B=39-766"/>
</dbReference>
<dbReference type="PDB" id="4PNZ">
    <property type="method" value="X-ray"/>
    <property type="resolution" value="1.90 A"/>
    <property type="chains" value="A/B=39-766"/>
</dbReference>
<dbReference type="PDB" id="4PV7">
    <property type="method" value="X-ray"/>
    <property type="resolution" value="3.24 A"/>
    <property type="chains" value="A/B=39-766"/>
</dbReference>
<dbReference type="PDB" id="4QZV">
    <property type="method" value="X-ray"/>
    <property type="resolution" value="2.59 A"/>
    <property type="chains" value="A/C=39-766"/>
</dbReference>
<dbReference type="PDB" id="5I7U">
    <property type="method" value="X-ray"/>
    <property type="resolution" value="1.95 A"/>
    <property type="chains" value="A/B=39-766"/>
</dbReference>
<dbReference type="PDB" id="5ISM">
    <property type="method" value="X-ray"/>
    <property type="resolution" value="2.00 A"/>
    <property type="chains" value="A/B=39-766"/>
</dbReference>
<dbReference type="PDB" id="5J3J">
    <property type="method" value="X-ray"/>
    <property type="resolution" value="2.75 A"/>
    <property type="chains" value="A/B=40-766"/>
</dbReference>
<dbReference type="PDB" id="5KBY">
    <property type="method" value="X-ray"/>
    <property type="resolution" value="2.24 A"/>
    <property type="chains" value="A/B/C/D=39-766"/>
</dbReference>
<dbReference type="PDB" id="5T4B">
    <property type="method" value="X-ray"/>
    <property type="resolution" value="1.76 A"/>
    <property type="chains" value="A/B=40-766"/>
</dbReference>
<dbReference type="PDB" id="5T4E">
    <property type="method" value="X-ray"/>
    <property type="resolution" value="1.77 A"/>
    <property type="chains" value="A/B=40-766"/>
</dbReference>
<dbReference type="PDB" id="5T4F">
    <property type="method" value="X-ray"/>
    <property type="resolution" value="1.90 A"/>
    <property type="chains" value="A/B=40-766"/>
</dbReference>
<dbReference type="PDB" id="5T4H">
    <property type="method" value="X-ray"/>
    <property type="resolution" value="2.61 A"/>
    <property type="chains" value="A/B=40-766"/>
</dbReference>
<dbReference type="PDB" id="5Y7H">
    <property type="method" value="X-ray"/>
    <property type="resolution" value="3.00 A"/>
    <property type="chains" value="A/B=39-766"/>
</dbReference>
<dbReference type="PDB" id="5Y7J">
    <property type="method" value="X-ray"/>
    <property type="resolution" value="2.52 A"/>
    <property type="chains" value="A/B/C/D=39-766"/>
</dbReference>
<dbReference type="PDB" id="5Y7K">
    <property type="method" value="X-ray"/>
    <property type="resolution" value="2.51 A"/>
    <property type="chains" value="A/B/C/D=39-766"/>
</dbReference>
<dbReference type="PDB" id="5ZID">
    <property type="method" value="X-ray"/>
    <property type="resolution" value="3.00 A"/>
    <property type="chains" value="A/B=40-766"/>
</dbReference>
<dbReference type="PDB" id="6B1E">
    <property type="method" value="X-ray"/>
    <property type="resolution" value="1.77 A"/>
    <property type="chains" value="A/B=39-766"/>
</dbReference>
<dbReference type="PDB" id="6B1O">
    <property type="method" value="X-ray"/>
    <property type="resolution" value="1.91 A"/>
    <property type="chains" value="A/B=39-766"/>
</dbReference>
<dbReference type="PDB" id="8WKU">
    <property type="method" value="X-ray"/>
    <property type="resolution" value="3.50 A"/>
    <property type="chains" value="A=39-766"/>
</dbReference>
<dbReference type="PDB" id="8ZDX">
    <property type="method" value="X-ray"/>
    <property type="resolution" value="2.60 A"/>
    <property type="chains" value="A/C=38-766"/>
</dbReference>
<dbReference type="PDB" id="8ZE6">
    <property type="method" value="X-ray"/>
    <property type="resolution" value="2.70 A"/>
    <property type="chains" value="B/D=40-766"/>
</dbReference>
<dbReference type="PDBsum" id="1J2E"/>
<dbReference type="PDBsum" id="1N1M"/>
<dbReference type="PDBsum" id="1NU6"/>
<dbReference type="PDBsum" id="1NU8"/>
<dbReference type="PDBsum" id="1PFQ"/>
<dbReference type="PDBsum" id="1R9M"/>
<dbReference type="PDBsum" id="1R9N"/>
<dbReference type="PDBsum" id="1RWQ"/>
<dbReference type="PDBsum" id="1TK3"/>
<dbReference type="PDBsum" id="1TKR"/>
<dbReference type="PDBsum" id="1U8E"/>
<dbReference type="PDBsum" id="1W1I"/>
<dbReference type="PDBsum" id="1WCY"/>
<dbReference type="PDBsum" id="1X70"/>
<dbReference type="PDBsum" id="2AJL"/>
<dbReference type="PDBsum" id="2BGN"/>
<dbReference type="PDBsum" id="2BGR"/>
<dbReference type="PDBsum" id="2BUB"/>
<dbReference type="PDBsum" id="2FJP"/>
<dbReference type="PDBsum" id="2G5P"/>
<dbReference type="PDBsum" id="2G5T"/>
<dbReference type="PDBsum" id="2G63"/>
<dbReference type="PDBsum" id="2HHA"/>
<dbReference type="PDBsum" id="2I03"/>
<dbReference type="PDBsum" id="2I78"/>
<dbReference type="PDBsum" id="2IIT"/>
<dbReference type="PDBsum" id="2IIV"/>
<dbReference type="PDBsum" id="2JID"/>
<dbReference type="PDBsum" id="2OAG"/>
<dbReference type="PDBsum" id="2OGZ"/>
<dbReference type="PDBsum" id="2OLE"/>
<dbReference type="PDBsum" id="2ONC"/>
<dbReference type="PDBsum" id="2OPH"/>
<dbReference type="PDBsum" id="2OQI"/>
<dbReference type="PDBsum" id="2OQV"/>
<dbReference type="PDBsum" id="2P8S"/>
<dbReference type="PDBsum" id="2QJR"/>
<dbReference type="PDBsum" id="2QKY"/>
<dbReference type="PDBsum" id="2QOE"/>
<dbReference type="PDBsum" id="2QT9"/>
<dbReference type="PDBsum" id="2QTB"/>
<dbReference type="PDBsum" id="2RGU"/>
<dbReference type="PDBsum" id="2RIP"/>
<dbReference type="PDBsum" id="3BJM"/>
<dbReference type="PDBsum" id="3C43"/>
<dbReference type="PDBsum" id="3C45"/>
<dbReference type="PDBsum" id="3CCB"/>
<dbReference type="PDBsum" id="3CCC"/>
<dbReference type="PDBsum" id="3D4L"/>
<dbReference type="PDBsum" id="3EIO"/>
<dbReference type="PDBsum" id="3F8S"/>
<dbReference type="PDBsum" id="3G0B"/>
<dbReference type="PDBsum" id="3G0C"/>
<dbReference type="PDBsum" id="3G0D"/>
<dbReference type="PDBsum" id="3G0G"/>
<dbReference type="PDBsum" id="3H0C"/>
<dbReference type="PDBsum" id="3HAB"/>
<dbReference type="PDBsum" id="3HAC"/>
<dbReference type="PDBsum" id="3KWF"/>
<dbReference type="PDBsum" id="3KWJ"/>
<dbReference type="PDBsum" id="3NOX"/>
<dbReference type="PDBsum" id="3O95"/>
<dbReference type="PDBsum" id="3O9V"/>
<dbReference type="PDBsum" id="3OC0"/>
<dbReference type="PDBsum" id="3OPM"/>
<dbReference type="PDBsum" id="3Q0T"/>
<dbReference type="PDBsum" id="3Q8W"/>
<dbReference type="PDBsum" id="3QBJ"/>
<dbReference type="PDBsum" id="3SWW"/>
<dbReference type="PDBsum" id="3SX4"/>
<dbReference type="PDBsum" id="3VJK"/>
<dbReference type="PDBsum" id="3VJL"/>
<dbReference type="PDBsum" id="3VJM"/>
<dbReference type="PDBsum" id="3W2T"/>
<dbReference type="PDBsum" id="3WQH"/>
<dbReference type="PDBsum" id="4A5S"/>
<dbReference type="PDBsum" id="4DSA"/>
<dbReference type="PDBsum" id="4DSZ"/>
<dbReference type="PDBsum" id="4DTC"/>
<dbReference type="PDBsum" id="4G1F"/>
<dbReference type="PDBsum" id="4J3J"/>
<dbReference type="PDBsum" id="4JH0"/>
<dbReference type="PDBsum" id="4KR0"/>
<dbReference type="PDBsum" id="4L72"/>
<dbReference type="PDBsum" id="4LKO"/>
<dbReference type="PDBsum" id="4N8D"/>
<dbReference type="PDBsum" id="4N8E"/>
<dbReference type="PDBsum" id="4PNZ"/>
<dbReference type="PDBsum" id="4PV7"/>
<dbReference type="PDBsum" id="4QZV"/>
<dbReference type="PDBsum" id="5I7U"/>
<dbReference type="PDBsum" id="5ISM"/>
<dbReference type="PDBsum" id="5J3J"/>
<dbReference type="PDBsum" id="5KBY"/>
<dbReference type="PDBsum" id="5T4B"/>
<dbReference type="PDBsum" id="5T4E"/>
<dbReference type="PDBsum" id="5T4F"/>
<dbReference type="PDBsum" id="5T4H"/>
<dbReference type="PDBsum" id="5Y7H"/>
<dbReference type="PDBsum" id="5Y7J"/>
<dbReference type="PDBsum" id="5Y7K"/>
<dbReference type="PDBsum" id="5ZID"/>
<dbReference type="PDBsum" id="6B1E"/>
<dbReference type="PDBsum" id="6B1O"/>
<dbReference type="PDBsum" id="8WKU"/>
<dbReference type="PDBsum" id="8ZDX"/>
<dbReference type="PDBsum" id="8ZE6"/>
<dbReference type="SMR" id="P27487"/>
<dbReference type="BioGRID" id="108137">
    <property type="interactions" value="441"/>
</dbReference>
<dbReference type="ComplexPortal" id="CPX-5768">
    <property type="entry name" value="MERS-CoV Spike - human DPP4 receptor complex"/>
</dbReference>
<dbReference type="ComplexPortal" id="CPX-5769">
    <property type="entry name" value="MERS-CoV Spike - human DPP4 receptor complex"/>
</dbReference>
<dbReference type="CORUM" id="P27487"/>
<dbReference type="DIP" id="DIP-351N"/>
<dbReference type="FunCoup" id="P27487">
    <property type="interactions" value="537"/>
</dbReference>
<dbReference type="IntAct" id="P27487">
    <property type="interactions" value="30"/>
</dbReference>
<dbReference type="MINT" id="P27487"/>
<dbReference type="STRING" id="9606.ENSP00000353731"/>
<dbReference type="BindingDB" id="P27487"/>
<dbReference type="ChEMBL" id="CHEMBL284"/>
<dbReference type="DrugBank" id="DB07356">
    <property type="generic name" value="(1S)-2-[(2S,5R)-2-(AMINOMETHYL)-5-ETHYNYLPYRROLIDIN-1-YL]-1-CYCLOPENTYL-2-OXOETHANAMINE"/>
</dbReference>
<dbReference type="DrugBank" id="DB06880">
    <property type="generic name" value="(1S)-2-[(2S,5R)-2-(AMINOMETHYL)-5-PROP-1-YN-1-YLPYRROLIDIN-1-YL]-1-CYCLOPENTYL-2-OXOETHANAMINE"/>
</dbReference>
<dbReference type="DrugBank" id="DB07072">
    <property type="generic name" value="(1S,2R,5S)-5-[3-(TRIFLUOROMETHYL)-5,6-DIHYDRO[1,2,4]TRIAZOLO[4,3-A]PYRAZIN-7(8H)-YL]-2-(2,4,5-TRIFLUOROPHENYL)CYCLOHEXANAMINE"/>
</dbReference>
<dbReference type="DrugBank" id="DB07465">
    <property type="generic name" value="(1S,3S,5S)-2-{(2S)-2-amino-2-[(1R,3S,5R,7S)-3-hydroxytricyclo[3.3.1.1~3,7~]dec-1-yl]acetyl}-2-azabicyclo[3.1.0]hexane-3-carbonitrile"/>
</dbReference>
<dbReference type="DrugBank" id="DB08051">
    <property type="generic name" value="(2R)-4-(2-BENZOYL-1,2-DIAZEPAN-1-YL)-4-OXO-1-(2,4,5-TRIFLUOROPHENYL)BUTAN-2-AMINE"/>
</dbReference>
<dbReference type="DrugBank" id="DB07081">
    <property type="generic name" value="(2R)-4-[(8R)-8-METHYL-2-(TRIFLUOROMETHYL)-5,6-DIHYDRO[1,2,4]TRIAZOLO[1,5-A]PYRAZIN-7(8H)-YL]-4-OXO-1-(2,4,5-TRIFLUOROPHENYL)BUTAN-2-AMINE"/>
</dbReference>
<dbReference type="DrugBank" id="DB07482">
    <property type="generic name" value="(2R)-N-[(2R)-2-(DIHYDROXYBORYL)-1-L-PROLYLPYRROLIDIN-2-YL]-N-[(5R)-5-(DIHYDROXYBORYL)-1-L-PROLYLPYRROLIDIN-2-YL]-L-PROLINAMIDE"/>
</dbReference>
<dbReference type="DrugBank" id="DB07193">
    <property type="generic name" value="(2R,3R)-7-(methylsulfonyl)-3-(2,4,5-trifluorophenyl)-1,2,3,4-tetrahydropyrido[1,2-a]benzimidazol-2-amine"/>
</dbReference>
<dbReference type="DrugBank" id="DB08024">
    <property type="generic name" value="(2S)-2-cyano-1-(4-phenyl-L-phenylalanyl)pyrrolidine"/>
</dbReference>
<dbReference type="DrugBank" id="DB03253">
    <property type="generic name" value="(2s)-Pyrrolidin-2-Ylmethylamine"/>
</dbReference>
<dbReference type="DrugBank" id="DB07092">
    <property type="generic name" value="(2S,3S)-3-AMINO-4-(3,3-DIFLUOROPYRROLIDIN-1-YL)-N,N-DIMETHYL-4-OXO-2-(TRANS-4-[1,2,4]TRIAZOLO[1,5-A]PYRIDIN-6-YLCYCLOHEXYL)BUTANAMIDE"/>
</dbReference>
<dbReference type="DrugBank" id="DB07135">
    <property type="generic name" value="(2S,3S)-3-AMINO-4-[(3S)-3-FLUOROPYRROLIDIN-1-YL]-N,N-DIMETHYL-4-OXO-2-(TRANS-4-[1,2,4]TRIAZOLO[1,5-A]PYRIDIN-5-YLCYCLOHEXYL)BUTANAMIDE"/>
</dbReference>
<dbReference type="DrugBank" id="DB06994">
    <property type="generic name" value="(2S,3S)-3-{3-[2-chloro-4-(methylsulfonyl)phenyl]-1,2,4-oxadiazol-5-yl}-1-cyclopentylidene-4-cyclopropyl-1-fluorobutan-2-amine"/>
</dbReference>
<dbReference type="DrugBank" id="DB07067">
    <property type="generic name" value="(2S,3S)-3-{3-[4-(METHYLSULFONYL)PHENYL]-1,2,4-OXADIAZOL-5-YL}-1-OXO-1-PYRROLIDIN-1-YLBUTAN-2-AMINE"/>
</dbReference>
<dbReference type="DrugBank" id="DB06993">
    <property type="generic name" value="(2S,3S)-4-cyclopropyl-3-{(3R,5R)-3-[2-fluoro-4-(methylsulfonyl)phenyl]-1,2,4-oxadiazolidin-5-yl}-1-[(3S)-3-fluoropyrrolidin-1-yl]-1-oxobutan-2-amine"/>
</dbReference>
<dbReference type="DrugBank" id="DB07154">
    <property type="generic name" value="(3R)-4-[(3R)-3-AMINO-4-(2,4,5-TRIFLUOROPHENYL)BUTANOYL]-3-METHYL-1,4-DIAZEPAN-2-ONE"/>
</dbReference>
<dbReference type="DrugBank" id="DB08164">
    <property type="generic name" value="(3R,4R)-1-{6-[3-(METHYLSULFONYL)PHENYL]PYRIMIDIN-4-YL}-4-(2,4,5-TRIFLUOROPHENYL)PIPERIDIN-3-AMINE"/>
</dbReference>
<dbReference type="DrugBank" id="DB07015">
    <property type="generic name" value="(3R,4R)-4-(pyrrolidin-1-ylcarbonyl)-1-(quinoxalin-2-ylcarbonyl)pyrrolidin-3-amine"/>
</dbReference>
<dbReference type="DrugBank" id="DB07851">
    <property type="generic name" value="(3R,4S)-1-(3,4-DIMETHOXYPHENYL)-3-(3-METHYLPHENYL)PIPERIDIN-4-AMINE"/>
</dbReference>
<dbReference type="DrugBank" id="DB08445">
    <property type="generic name" value="(3R,4S)-1-[6-(6-METHOXYPYRIDIN-3-YL)PYRIMIDIN-4-YL]-4-(2,4,5-TRIFLUOROPHENYL)PYRROLIDIN-3-AMINE"/>
</dbReference>
<dbReference type="DrugBank" id="DB07666">
    <property type="generic name" value="(3R,4S)-1-{6-[3-(METHYLSULFONYL)PHENYL]PYRIMIDIN-4-YL}-4-(2,4,5-TRIFLUOROPHENYL)PYRROLIDIN-3-AMINE"/>
</dbReference>
<dbReference type="DrugBank" id="DB07830">
    <property type="generic name" value="(4R,5R)-5-AMINO-1-[2-(1,3-BENZODIOXOL-5-YL)ETHYL]-4-(2,4,5-TRIFLUOROPHENYL)PIPERIDIN-2-ONE"/>
</dbReference>
<dbReference type="DrugBank" id="DB07021">
    <property type="generic name" value="(7R,8R)-8-(2,4,5-trifluorophenyl)-6,7,8,9-tetrahydroimidazo[1,2-a:4,5-c']dipyridin-7-amine"/>
</dbReference>
<dbReference type="DrugBank" id="DB04578">
    <property type="generic name" value="(S)-2-[(R)-3-amino-4-(2-fluorophenyl)butyryl]-1,2,3,4-tetrahydroisoquinoline-3-carboxamide"/>
</dbReference>
<dbReference type="DrugBank" id="DB04577">
    <property type="generic name" value="1-(1-phenylcyclopentyl)methylamine"/>
</dbReference>
<dbReference type="DrugBank" id="DB07412">
    <property type="generic name" value="1-biphenyl-2-ylmethanamine"/>
</dbReference>
<dbReference type="DrugBank" id="DB08588">
    <property type="generic name" value="2-({2-[(3R)-3-AMINOPIPERIDIN-1-YL]-4-OXOQUINAZOLIN-3(4H)-YL}METHYL)BENZONITRILE"/>
</dbReference>
<dbReference type="DrugBank" id="DB08743">
    <property type="generic name" value="2-({8-[(3R)-3-AMINOPIPERIDIN-1-YL]-1,3-DIMETHYL-2,6-DIOXO-1,2,3,6-TETRAHYDRO-7H-PURIN-7-YL}METHYL)BENZONITRILE"/>
</dbReference>
<dbReference type="DrugBank" id="DB01884">
    <property type="generic name" value="2-Amino-3-Methyl-1-Pyrrolidin-1-Yl-Butan-1-One"/>
</dbReference>
<dbReference type="DrugBank" id="DB07181">
    <property type="generic name" value="4'-[(1R)-1-amino-2-(2,5-difluorophenyl)ethyl]biphenyl-3-carboxamide"/>
</dbReference>
<dbReference type="DrugBank" id="DB07271">
    <property type="generic name" value="4-[(3R)-3-Amino-4-(2,4,5-trifluorophenyl)butanoyl]-3-(2,2,2-trifluoroethyl)-1,4-diazepan-2-one"/>
</dbReference>
<dbReference type="DrugBank" id="DB08672">
    <property type="generic name" value="4-[(3R)-3-{[2-(4-FLUOROPHENYL)-2-OXOETHYL]AMINO}BUTYL]BENZAMIDE"/>
</dbReference>
<dbReference type="DrugBank" id="DB03660">
    <property type="generic name" value="4-Iodo-L-phenylalanine"/>
</dbReference>
<dbReference type="DrugBank" id="DB02004">
    <property type="generic name" value="5-(Aminomethyl)-6-(2,4-Dichlorophenyl)-2-(3,5-Dimethoxyphenyl)Pyrimidin-4-Amine"/>
</dbReference>
<dbReference type="DrugBank" id="DB08504">
    <property type="generic name" value="6-(4-{(1S,2S)-2-AMINO-1-[(DIMETHYLAMINO)CARBONYL]-3-[(3S)-3-FLUOROPYRROLIDIN-1-YL]-3-OXOPROPYL}PHENYL)-1H-[1,2,4]TRIAZOLO[1,5-A]PYRIDIN-4-IUM"/>
</dbReference>
<dbReference type="DrugBank" id="DB07239">
    <property type="generic name" value="7-(aminomethyl)-6-(2-chlorophenyl)-1-methyl-1H-benzimidazole-5-carbonitrile"/>
</dbReference>
<dbReference type="DrugBank" id="DB08530">
    <property type="generic name" value="7-BENZYL-1,3-DIMETHYL-8-PIPERAZIN-1-YL-3,7-DIHYDRO-PURINE-2,6-DIONE"/>
</dbReference>
<dbReference type="DrugBank" id="DB08044">
    <property type="generic name" value="ABT-341"/>
</dbReference>
<dbReference type="DrugBank" id="DB06203">
    <property type="generic name" value="Alogliptin"/>
</dbReference>
<dbReference type="DrugBank" id="DB06011">
    <property type="generic name" value="AMG-222"/>
</dbReference>
<dbReference type="DrugBank" id="DB12417">
    <property type="generic name" value="Anagliptin"/>
</dbReference>
<dbReference type="DrugBank" id="DB01076">
    <property type="generic name" value="Atorvastatin"/>
</dbReference>
<dbReference type="DrugBank" id="DB06127">
    <property type="generic name" value="Bisegliptin"/>
</dbReference>
<dbReference type="DrugBank" id="DB16134">
    <property type="generic name" value="Denagliptin"/>
</dbReference>
<dbReference type="DrugBank" id="DB04491">
    <property type="generic name" value="Diisopropylphosphono Group"/>
</dbReference>
<dbReference type="DrugBank" id="DB11723">
    <property type="generic name" value="Dutogliptin"/>
</dbReference>
<dbReference type="DrugBank" id="DB12625">
    <property type="generic name" value="Evogliptin"/>
</dbReference>
<dbReference type="DrugBank" id="DB01276">
    <property type="generic name" value="Exenatide"/>
</dbReference>
<dbReference type="DrugBank" id="DB12412">
    <property type="generic name" value="Gemigliptin"/>
</dbReference>
<dbReference type="DrugBank" id="DB08382">
    <property type="generic name" value="Gosogliptin"/>
</dbReference>
<dbReference type="DrugBank" id="DB08882">
    <property type="generic name" value="Linagliptin"/>
</dbReference>
<dbReference type="DrugBank" id="DB06655">
    <property type="generic name" value="Liraglutide"/>
</dbReference>
<dbReference type="DrugBank" id="DB07328">
    <property type="generic name" value="METHYL 4-{[({[(2R,5S)-5-{[(2S)-2-(AMINOMETHYL)PYRROLIDIN-1-YL]CARBONYL}PYRROLIDIN-2-YL]METHYL}AMINO)CARBONYL]AMINO}BENZOATE"/>
</dbReference>
<dbReference type="DrugBank" id="DB06939">
    <property type="generic name" value="N-(TRANS-4-{(1S,2S)-2-AMINO-3-[(3S)-3-FLUOROPYRROLIDIN-1-YL]-1-METHYL-3-OXOPROPYL}CYCLOHEXYL)-N-METHYLACETAMIDE"/>
</dbReference>
<dbReference type="DrugBank" id="DB07779">
    <property type="generic name" value="N-({(2S)-1-[(3R)-3-AMINO-4-(2-FLUOROPHENYL)BUTANOYL]PYRROLIDIN-2-YL}METHYL)BENZAMIDE"/>
</dbReference>
<dbReference type="DrugBank" id="DB08429">
    <property type="generic name" value="N-({(2S)-1-[(3R)-3-amino-4-(3-chlorophenyl)butanoyl]pyrrolidin-2-yl}methyl)-3-(methylsulfonyl)benzamide"/>
</dbReference>
<dbReference type="DrugBank" id="DB11992">
    <property type="generic name" value="Omarigliptin"/>
</dbReference>
<dbReference type="DrugBank" id="DB05001">
    <property type="generic name" value="PSN9301"/>
</dbReference>
<dbReference type="DrugBank" id="DB14898">
    <property type="generic name" value="Retagliptin"/>
</dbReference>
<dbReference type="DrugBank" id="DB06335">
    <property type="generic name" value="Saxagliptin"/>
</dbReference>
<dbReference type="DrugBank" id="DB13928">
    <property type="generic name" value="Semaglutide"/>
</dbReference>
<dbReference type="DrugBank" id="DB01261">
    <property type="generic name" value="Sitagliptin"/>
</dbReference>
<dbReference type="DrugBank" id="DB11950">
    <property type="generic name" value="Teneligliptin"/>
</dbReference>
<dbReference type="DrugBank" id="DB15323">
    <property type="generic name" value="Trelagliptin"/>
</dbReference>
<dbReference type="DrugBank" id="DB04876">
    <property type="generic name" value="Vildagliptin"/>
</dbReference>
<dbReference type="DrugCentral" id="P27487"/>
<dbReference type="GuidetoPHARMACOLOGY" id="1612"/>
<dbReference type="ESTHER" id="human-DPP4">
    <property type="family name" value="DPP4N_Peptidase_S9"/>
</dbReference>
<dbReference type="MEROPS" id="S09.003"/>
<dbReference type="MoonProt" id="P27487"/>
<dbReference type="TCDB" id="8.A.51.1.5">
    <property type="family name" value="the dipeptidyl-aminopeptidase-like protein 6 beta subunit of kv4 channels (dpp6) family"/>
</dbReference>
<dbReference type="GlyConnect" id="1177">
    <property type="glycosylation" value="20 N-Linked glycans (4 sites)"/>
</dbReference>
<dbReference type="GlyCosmos" id="P27487">
    <property type="glycosylation" value="10 sites, 21 glycans"/>
</dbReference>
<dbReference type="GlyGen" id="P27487">
    <property type="glycosylation" value="15 sites, 84 N-linked glycans (5 sites), 1 O-linked glycan (1 site)"/>
</dbReference>
<dbReference type="iPTMnet" id="P27487"/>
<dbReference type="PhosphoSitePlus" id="P27487"/>
<dbReference type="SwissPalm" id="P27487"/>
<dbReference type="BioMuta" id="DPP4"/>
<dbReference type="DMDM" id="1352311"/>
<dbReference type="CPTAC" id="CPTAC-1292"/>
<dbReference type="jPOST" id="P27487"/>
<dbReference type="MassIVE" id="P27487"/>
<dbReference type="PaxDb" id="9606-ENSP00000353731"/>
<dbReference type="PeptideAtlas" id="P27487"/>
<dbReference type="ProteomicsDB" id="54396"/>
<dbReference type="ABCD" id="P27487">
    <property type="antibodies" value="15 sequenced antibodies"/>
</dbReference>
<dbReference type="Antibodypedia" id="19093">
    <property type="antibodies" value="1791 antibodies from 46 providers"/>
</dbReference>
<dbReference type="DNASU" id="1803"/>
<dbReference type="Ensembl" id="ENST00000360534.8">
    <property type="protein sequence ID" value="ENSP00000353731.3"/>
    <property type="gene ID" value="ENSG00000197635.11"/>
</dbReference>
<dbReference type="GeneID" id="1803"/>
<dbReference type="KEGG" id="hsa:1803"/>
<dbReference type="MANE-Select" id="ENST00000360534.8">
    <property type="protein sequence ID" value="ENSP00000353731.3"/>
    <property type="RefSeq nucleotide sequence ID" value="NM_001935.4"/>
    <property type="RefSeq protein sequence ID" value="NP_001926.2"/>
</dbReference>
<dbReference type="UCSC" id="uc002ubz.4">
    <property type="organism name" value="human"/>
</dbReference>
<dbReference type="AGR" id="HGNC:3009"/>
<dbReference type="CTD" id="1803"/>
<dbReference type="DisGeNET" id="1803"/>
<dbReference type="GeneCards" id="DPP4"/>
<dbReference type="HGNC" id="HGNC:3009">
    <property type="gene designation" value="DPP4"/>
</dbReference>
<dbReference type="HPA" id="ENSG00000197635">
    <property type="expression patterns" value="Tissue enhanced (intestine, parathyroid gland, placenta, prostate)"/>
</dbReference>
<dbReference type="MIM" id="102720">
    <property type="type" value="gene"/>
</dbReference>
<dbReference type="neXtProt" id="NX_P27487"/>
<dbReference type="OpenTargets" id="ENSG00000197635"/>
<dbReference type="PharmGKB" id="PA27467"/>
<dbReference type="VEuPathDB" id="HostDB:ENSG00000197635"/>
<dbReference type="eggNOG" id="KOG2100">
    <property type="taxonomic scope" value="Eukaryota"/>
</dbReference>
<dbReference type="GeneTree" id="ENSGT00940000161291"/>
<dbReference type="HOGENOM" id="CLU_006105_4_3_1"/>
<dbReference type="InParanoid" id="P27487"/>
<dbReference type="OMA" id="YDVYDIA"/>
<dbReference type="OrthoDB" id="16520at2759"/>
<dbReference type="PAN-GO" id="P27487">
    <property type="GO annotations" value="3 GO annotations based on evolutionary models"/>
</dbReference>
<dbReference type="PhylomeDB" id="P27487"/>
<dbReference type="TreeFam" id="TF313309"/>
<dbReference type="BRENDA" id="3.4.14.5">
    <property type="organism ID" value="2681"/>
</dbReference>
<dbReference type="PathwayCommons" id="P27487"/>
<dbReference type="Reactome" id="R-HSA-381771">
    <property type="pathway name" value="Synthesis, secretion, and inactivation of Glucagon-like Peptide-1 (GLP-1)"/>
</dbReference>
<dbReference type="Reactome" id="R-HSA-400511">
    <property type="pathway name" value="Synthesis, secretion, and inactivation of Glucose-dependent Insulinotropic Polypeptide (GIP)"/>
</dbReference>
<dbReference type="SABIO-RK" id="P27487"/>
<dbReference type="SignaLink" id="P27487"/>
<dbReference type="SIGNOR" id="P27487"/>
<dbReference type="BioGRID-ORCS" id="1803">
    <property type="hits" value="19 hits in 1164 CRISPR screens"/>
</dbReference>
<dbReference type="ChiTaRS" id="DPP4">
    <property type="organism name" value="human"/>
</dbReference>
<dbReference type="EvolutionaryTrace" id="P27487"/>
<dbReference type="GeneWiki" id="Dipeptidyl_peptidase-4"/>
<dbReference type="GenomeRNAi" id="1803"/>
<dbReference type="Pharos" id="P27487">
    <property type="development level" value="Tclin"/>
</dbReference>
<dbReference type="PRO" id="PR:P27487"/>
<dbReference type="Proteomes" id="UP000005640">
    <property type="component" value="Chromosome 2"/>
</dbReference>
<dbReference type="RNAct" id="P27487">
    <property type="molecule type" value="protein"/>
</dbReference>
<dbReference type="Bgee" id="ENSG00000197635">
    <property type="expression patterns" value="Expressed in calcaneal tendon and 158 other cell types or tissues"/>
</dbReference>
<dbReference type="ExpressionAtlas" id="P27487">
    <property type="expression patterns" value="baseline and differential"/>
</dbReference>
<dbReference type="GO" id="GO:0016324">
    <property type="term" value="C:apical plasma membrane"/>
    <property type="evidence" value="ECO:0000314"/>
    <property type="project" value="UniProtKB"/>
</dbReference>
<dbReference type="GO" id="GO:0009986">
    <property type="term" value="C:cell surface"/>
    <property type="evidence" value="ECO:0000314"/>
    <property type="project" value="UniProtKB"/>
</dbReference>
<dbReference type="GO" id="GO:0030139">
    <property type="term" value="C:endocytic vesicle"/>
    <property type="evidence" value="ECO:0000314"/>
    <property type="project" value="UniProtKB"/>
</dbReference>
<dbReference type="GO" id="GO:0070062">
    <property type="term" value="C:extracellular exosome"/>
    <property type="evidence" value="ECO:0007005"/>
    <property type="project" value="UniProtKB"/>
</dbReference>
<dbReference type="GO" id="GO:0005576">
    <property type="term" value="C:extracellular region"/>
    <property type="evidence" value="ECO:0000304"/>
    <property type="project" value="Reactome"/>
</dbReference>
<dbReference type="GO" id="GO:0005925">
    <property type="term" value="C:focal adhesion"/>
    <property type="evidence" value="ECO:0007005"/>
    <property type="project" value="UniProtKB"/>
</dbReference>
<dbReference type="GO" id="GO:0046581">
    <property type="term" value="C:intercellular canaliculus"/>
    <property type="evidence" value="ECO:0007669"/>
    <property type="project" value="Ensembl"/>
</dbReference>
<dbReference type="GO" id="GO:0030027">
    <property type="term" value="C:lamellipodium"/>
    <property type="evidence" value="ECO:0000314"/>
    <property type="project" value="UniProtKB"/>
</dbReference>
<dbReference type="GO" id="GO:0031258">
    <property type="term" value="C:lamellipodium membrane"/>
    <property type="evidence" value="ECO:0007669"/>
    <property type="project" value="UniProtKB-SubCell"/>
</dbReference>
<dbReference type="GO" id="GO:0005765">
    <property type="term" value="C:lysosomal membrane"/>
    <property type="evidence" value="ECO:0007005"/>
    <property type="project" value="UniProtKB"/>
</dbReference>
<dbReference type="GO" id="GO:0016020">
    <property type="term" value="C:membrane"/>
    <property type="evidence" value="ECO:0007005"/>
    <property type="project" value="UniProtKB"/>
</dbReference>
<dbReference type="GO" id="GO:0045121">
    <property type="term" value="C:membrane raft"/>
    <property type="evidence" value="ECO:0007669"/>
    <property type="project" value="UniProtKB-SubCell"/>
</dbReference>
<dbReference type="GO" id="GO:0005886">
    <property type="term" value="C:plasma membrane"/>
    <property type="evidence" value="ECO:0000314"/>
    <property type="project" value="UniProtKB"/>
</dbReference>
<dbReference type="GO" id="GO:0004177">
    <property type="term" value="F:aminopeptidase activity"/>
    <property type="evidence" value="ECO:0007669"/>
    <property type="project" value="UniProtKB-KW"/>
</dbReference>
<dbReference type="GO" id="GO:0045499">
    <property type="term" value="F:chemorepellent activity"/>
    <property type="evidence" value="ECO:0000314"/>
    <property type="project" value="CACAO"/>
</dbReference>
<dbReference type="GO" id="GO:0008239">
    <property type="term" value="F:dipeptidyl-peptidase activity"/>
    <property type="evidence" value="ECO:0000314"/>
    <property type="project" value="UniProtKB"/>
</dbReference>
<dbReference type="GO" id="GO:0042802">
    <property type="term" value="F:identical protein binding"/>
    <property type="evidence" value="ECO:0000353"/>
    <property type="project" value="IntAct"/>
</dbReference>
<dbReference type="GO" id="GO:0002020">
    <property type="term" value="F:protease binding"/>
    <property type="evidence" value="ECO:0000353"/>
    <property type="project" value="UniProtKB"/>
</dbReference>
<dbReference type="GO" id="GO:0042803">
    <property type="term" value="F:protein homodimerization activity"/>
    <property type="evidence" value="ECO:0000353"/>
    <property type="project" value="UniProtKB"/>
</dbReference>
<dbReference type="GO" id="GO:0004252">
    <property type="term" value="F:serine-type endopeptidase activity"/>
    <property type="evidence" value="ECO:0000269"/>
    <property type="project" value="Reactome"/>
</dbReference>
<dbReference type="GO" id="GO:0008236">
    <property type="term" value="F:serine-type peptidase activity"/>
    <property type="evidence" value="ECO:0000314"/>
    <property type="project" value="UniProtKB"/>
</dbReference>
<dbReference type="GO" id="GO:0005102">
    <property type="term" value="F:signaling receptor binding"/>
    <property type="evidence" value="ECO:0000353"/>
    <property type="project" value="UniProtKB"/>
</dbReference>
<dbReference type="GO" id="GO:0001618">
    <property type="term" value="F:virus receptor activity"/>
    <property type="evidence" value="ECO:0000314"/>
    <property type="project" value="CACAO"/>
</dbReference>
<dbReference type="GO" id="GO:0001662">
    <property type="term" value="P:behavioral fear response"/>
    <property type="evidence" value="ECO:0007669"/>
    <property type="project" value="Ensembl"/>
</dbReference>
<dbReference type="GO" id="GO:0007155">
    <property type="term" value="P:cell adhesion"/>
    <property type="evidence" value="ECO:0007669"/>
    <property type="project" value="UniProtKB-KW"/>
</dbReference>
<dbReference type="GO" id="GO:0043542">
    <property type="term" value="P:endothelial cell migration"/>
    <property type="evidence" value="ECO:0000314"/>
    <property type="project" value="UniProtKB"/>
</dbReference>
<dbReference type="GO" id="GO:0120116">
    <property type="term" value="P:glucagon processing"/>
    <property type="evidence" value="ECO:0000304"/>
    <property type="project" value="Reactome"/>
</dbReference>
<dbReference type="GO" id="GO:0035641">
    <property type="term" value="P:locomotory exploration behavior"/>
    <property type="evidence" value="ECO:0007669"/>
    <property type="project" value="Ensembl"/>
</dbReference>
<dbReference type="GO" id="GO:0061025">
    <property type="term" value="P:membrane fusion"/>
    <property type="evidence" value="ECO:0000303"/>
    <property type="project" value="ComplexPortal"/>
</dbReference>
<dbReference type="GO" id="GO:0010716">
    <property type="term" value="P:negative regulation of extracellular matrix disassembly"/>
    <property type="evidence" value="ECO:0000314"/>
    <property type="project" value="UniProtKB"/>
</dbReference>
<dbReference type="GO" id="GO:0090024">
    <property type="term" value="P:negative regulation of neutrophil chemotaxis"/>
    <property type="evidence" value="ECO:0000315"/>
    <property type="project" value="CACAO"/>
</dbReference>
<dbReference type="GO" id="GO:0016486">
    <property type="term" value="P:peptide hormone processing"/>
    <property type="evidence" value="ECO:0000304"/>
    <property type="project" value="Reactome"/>
</dbReference>
<dbReference type="GO" id="GO:0008284">
    <property type="term" value="P:positive regulation of cell population proliferation"/>
    <property type="evidence" value="ECO:0000314"/>
    <property type="project" value="UniProtKB"/>
</dbReference>
<dbReference type="GO" id="GO:0006508">
    <property type="term" value="P:proteolysis"/>
    <property type="evidence" value="ECO:0000314"/>
    <property type="project" value="CAFA"/>
</dbReference>
<dbReference type="GO" id="GO:0036343">
    <property type="term" value="P:psychomotor behavior"/>
    <property type="evidence" value="ECO:0007669"/>
    <property type="project" value="Ensembl"/>
</dbReference>
<dbReference type="GO" id="GO:0019065">
    <property type="term" value="P:receptor-mediated endocytosis of virus by host cell"/>
    <property type="evidence" value="ECO:0000303"/>
    <property type="project" value="ComplexPortal"/>
</dbReference>
<dbReference type="GO" id="GO:0046813">
    <property type="term" value="P:receptor-mediated virion attachment to host cell"/>
    <property type="evidence" value="ECO:0000303"/>
    <property type="project" value="ComplexPortal"/>
</dbReference>
<dbReference type="GO" id="GO:0033632">
    <property type="term" value="P:regulation of cell-cell adhesion mediated by integrin"/>
    <property type="evidence" value="ECO:0000314"/>
    <property type="project" value="UniProtKB"/>
</dbReference>
<dbReference type="GO" id="GO:0001666">
    <property type="term" value="P:response to hypoxia"/>
    <property type="evidence" value="ECO:0000314"/>
    <property type="project" value="UniProtKB"/>
</dbReference>
<dbReference type="GO" id="GO:0046718">
    <property type="term" value="P:symbiont entry into host cell"/>
    <property type="evidence" value="ECO:0000303"/>
    <property type="project" value="ComplexPortal"/>
</dbReference>
<dbReference type="GO" id="GO:0042110">
    <property type="term" value="P:T cell activation"/>
    <property type="evidence" value="ECO:0000314"/>
    <property type="project" value="UniProtKB"/>
</dbReference>
<dbReference type="GO" id="GO:0031295">
    <property type="term" value="P:T cell costimulation"/>
    <property type="evidence" value="ECO:0000314"/>
    <property type="project" value="UniProtKB"/>
</dbReference>
<dbReference type="FunFam" id="2.140.10.30:FF:000001">
    <property type="entry name" value="Dipeptidyl peptidase 4"/>
    <property type="match status" value="1"/>
</dbReference>
<dbReference type="FunFam" id="3.40.50.1820:FF:000003">
    <property type="entry name" value="Dipeptidyl peptidase 4"/>
    <property type="match status" value="1"/>
</dbReference>
<dbReference type="Gene3D" id="3.40.50.1820">
    <property type="entry name" value="alpha/beta hydrolase"/>
    <property type="match status" value="1"/>
</dbReference>
<dbReference type="Gene3D" id="2.140.10.30">
    <property type="entry name" value="Dipeptidylpeptidase IV, N-terminal domain"/>
    <property type="match status" value="1"/>
</dbReference>
<dbReference type="InterPro" id="IPR029058">
    <property type="entry name" value="AB_hydrolase_fold"/>
</dbReference>
<dbReference type="InterPro" id="IPR002471">
    <property type="entry name" value="Pept_S9_AS"/>
</dbReference>
<dbReference type="InterPro" id="IPR001375">
    <property type="entry name" value="Peptidase_S9_cat"/>
</dbReference>
<dbReference type="InterPro" id="IPR002469">
    <property type="entry name" value="Peptidase_S9B_N"/>
</dbReference>
<dbReference type="InterPro" id="IPR050278">
    <property type="entry name" value="Serine_Prot_S9B/DPPIV"/>
</dbReference>
<dbReference type="PANTHER" id="PTHR11731:SF128">
    <property type="entry name" value="DIPEPTIDYL PEPTIDASE 4"/>
    <property type="match status" value="1"/>
</dbReference>
<dbReference type="PANTHER" id="PTHR11731">
    <property type="entry name" value="PROTEASE FAMILY S9B,C DIPEPTIDYL-PEPTIDASE IV-RELATED"/>
    <property type="match status" value="1"/>
</dbReference>
<dbReference type="Pfam" id="PF00930">
    <property type="entry name" value="DPPIV_N"/>
    <property type="match status" value="1"/>
</dbReference>
<dbReference type="Pfam" id="PF00326">
    <property type="entry name" value="Peptidase_S9"/>
    <property type="match status" value="1"/>
</dbReference>
<dbReference type="SUPFAM" id="SSF53474">
    <property type="entry name" value="alpha/beta-Hydrolases"/>
    <property type="match status" value="1"/>
</dbReference>
<dbReference type="SUPFAM" id="SSF82171">
    <property type="entry name" value="DPP6 N-terminal domain-like"/>
    <property type="match status" value="1"/>
</dbReference>
<dbReference type="PROSITE" id="PS00708">
    <property type="entry name" value="PRO_ENDOPEP_SER"/>
    <property type="match status" value="1"/>
</dbReference>
<comment type="function">
    <text evidence="3 4 6 7 8 15 18 20 23 24 25">Cell surface glycoprotein receptor involved in the costimulatory signal essential for T-cell receptor (TCR)-mediated T-cell activation (PubMed:10900005, PubMed:10951221, PubMed:11772392, PubMed:17287217). Acts as a positive regulator of T-cell coactivation, by binding at least ADA, CAV1, IGF2R, and PTPRC (PubMed:10900005, PubMed:10951221, PubMed:11772392, PubMed:14691230). Its binding to CAV1 and CARD11 induces T-cell proliferation and NF-kappa-B activation in a T-cell receptor/CD3-dependent manner (PubMed:17287217). Its interaction with ADA also regulates lymphocyte-epithelial cell adhesion (PubMed:11772392). In association with FAP is involved in the pericellular proteolysis of the extracellular matrix (ECM), the migration and invasion of endothelial cells into the ECM (PubMed:10593948, PubMed:16651416). May be involved in the promotion of lymphatic endothelial cells adhesion, migration and tube formation (PubMed:18708048). When overexpressed, enhanced cell proliferation, a process inhibited by GPC3 (PubMed:17549790). Also acts as a serine exopeptidase with a dipeptidyl peptidase activity that regulates various physiological processes by cleaving peptides in the circulation, including many chemokines, mitogenic growth factors, neuropeptides and peptide hormones such as brain natriuretic peptide 32 (PubMed:10570924, PubMed:16254193). Removes N-terminal dipeptides sequentially from polypeptides having unsubstituted N-termini provided that the penultimate residue is proline (PubMed:10593948).</text>
</comment>
<comment type="function">
    <text evidence="29">(Microbial infection) Acts as a receptor for human coronavirus MERS-CoV-2.</text>
</comment>
<comment type="catalytic activity">
    <reaction evidence="2 4">
        <text>Release of an N-terminal dipeptide, Xaa-Yaa-|-Zaa-, from a polypeptide, preferentially when Yaa is Pro, provided Zaa is neither Pro nor hydroxyproline.</text>
        <dbReference type="EC" id="3.4.14.5"/>
    </reaction>
</comment>
<comment type="activity regulation">
    <text evidence="24 25">Inhibited by GPC3 and diprotin A.</text>
</comment>
<comment type="subunit">
    <text evidence="6 7 10 11 12 13 14 15 16 17 20 23 24 28 31 32 33">Monomer. Homodimer (PubMed:12483204, PubMed:12646248, PubMed:12832764, PubMed:12906826, PubMed:15448155, PubMed:17287217). Heterodimer with Seprase (FAP) (PubMed:16651416). Requires homodimerization for optimal dipeptidyl peptidase activity and T-cell costimulation. Found in a membrane raft complex, at least composed of BCL10, CARD11, DPP4 and IKBKB (PubMed:17287217). Associates with collagen (PubMed:8526932). Interacts with PTPRC; the interaction is enhanced in an interleukin-12-dependent manner in activated lymphocytes (PubMed:12676959). Interacts (via extracellular domain) with ADA; does not inhibit its dipeptidyl peptidase activity (PubMed:10951221, PubMed:14691230, PubMed:15016824, PubMed:7907293, PubMed:8101391). Interacts with CAV1 (via the N-terminus); the interaction is direct (PubMed:17287217). Interacts (via cytoplasmic tail) with CARD11 (via PDZ domain); its homodimerization is necessary for interaction with CARD11 (PubMed:17287217). Interacts with IGF2R; the interaction is direct (PubMed:10900005). Interacts with GPC3 (PubMed:17549790). Interacts with human coronavirus-EMC spike protein and acts as a receptor for this virus (PubMed:23486063).</text>
</comment>
<comment type="subunit">
    <text evidence="29">(Microbial infection) Interacts with MERS coronavirus/MERS-CoV spike protein.</text>
</comment>
<comment type="interaction">
    <interactant intactId="EBI-2871277">
        <id>P27487</id>
    </interactant>
    <interactant intactId="EBI-727357">
        <id>P51671</id>
        <label>CCL11</label>
    </interactant>
    <organismsDiffer>false</organismsDiffer>
    <experiments>2</experiments>
</comment>
<comment type="interaction">
    <interactant intactId="EBI-2871277">
        <id>P27487</id>
    </interactant>
    <interactant intactId="EBI-7815386">
        <id>P02778</id>
        <label>CXCL10</label>
    </interactant>
    <organismsDiffer>false</organismsDiffer>
    <experiments>2</experiments>
</comment>
<comment type="interaction">
    <interactant intactId="EBI-2871277">
        <id>P27487</id>
    </interactant>
    <interactant intactId="EBI-2871971">
        <id>O14625</id>
        <label>CXCL11</label>
    </interactant>
    <organismsDiffer>false</organismsDiffer>
    <experiments>2</experiments>
</comment>
<comment type="interaction">
    <interactant intactId="EBI-2871277">
        <id>P27487</id>
    </interactant>
    <interactant intactId="EBI-2114901">
        <id>P19875</id>
        <label>CXCL2</label>
    </interactant>
    <organismsDiffer>false</organismsDiffer>
    <experiments>2</experiments>
</comment>
<comment type="interaction">
    <interactant intactId="EBI-2871277">
        <id>P27487</id>
    </interactant>
    <interactant intactId="EBI-3911467">
        <id>Q07325</id>
        <label>CXCL9</label>
    </interactant>
    <organismsDiffer>false</organismsDiffer>
    <experiments>2</experiments>
</comment>
<comment type="interaction">
    <interactant intactId="EBI-2871277">
        <id>P27487</id>
    </interactant>
    <interactant intactId="EBI-2871277">
        <id>P27487</id>
        <label>DPP4</label>
    </interactant>
    <organismsDiffer>false</organismsDiffer>
    <experiments>12</experiments>
</comment>
<comment type="interaction">
    <interactant intactId="EBI-2871277">
        <id>P27487</id>
    </interactant>
    <interactant intactId="EBI-7629173">
        <id>P01275</id>
        <label>GCG</label>
    </interactant>
    <organismsDiffer>false</organismsDiffer>
    <experiments>4</experiments>
</comment>
<comment type="interaction">
    <interactant intactId="EBI-2871277">
        <id>P27487</id>
    </interactant>
    <interactant intactId="EBI-10232876">
        <id>Q14416</id>
        <label>GRM2</label>
    </interactant>
    <organismsDiffer>false</organismsDiffer>
    <experiments>2</experiments>
</comment>
<comment type="interaction">
    <interactant intactId="EBI-2871277">
        <id>P27487</id>
    </interactant>
    <interactant intactId="EBI-751454">
        <id>P01282</id>
        <label>VIP</label>
    </interactant>
    <organismsDiffer>false</organismsDiffer>
    <experiments>2</experiments>
</comment>
<comment type="interaction">
    <interactant intactId="EBI-2871277">
        <id>P27487</id>
    </interactant>
    <interactant intactId="EBI-7475530">
        <id>P56658</id>
        <label>ADA</label>
    </interactant>
    <organismsDiffer>true</organismsDiffer>
    <experiments>5</experiments>
</comment>
<comment type="interaction">
    <interactant intactId="EBI-2871277">
        <id>P27487</id>
    </interactant>
    <interactant intactId="EBI-25589622">
        <id>A0A2R4KP93</id>
        <label>S</label>
    </interactant>
    <organismsDiffer>true</organismsDiffer>
    <experiments>2</experiments>
</comment>
<comment type="interaction">
    <interactant intactId="EBI-2871277">
        <id>P27487</id>
    </interactant>
    <interactant intactId="EBI-16040613">
        <id>K0BRG7</id>
        <label>S</label>
    </interactant>
    <organismsDiffer>true</organismsDiffer>
    <experiments>5</experiments>
</comment>
<comment type="interaction">
    <interactant intactId="EBI-2871277">
        <id>P27487</id>
    </interactant>
    <interactant intactId="EBI-25474996">
        <id>K9N5Q8</id>
        <label>S</label>
    </interactant>
    <organismsDiffer>true</organismsDiffer>
    <experiments>7</experiments>
</comment>
<comment type="interaction">
    <interactant intactId="EBI-2871277">
        <id>P27487</id>
    </interactant>
    <interactant intactId="EBI-25645424">
        <id>R9UQ53</id>
        <label>S</label>
    </interactant>
    <organismsDiffer>true</organismsDiffer>
    <experiments>3</experiments>
</comment>
<comment type="subcellular location">
    <molecule>Dipeptidyl peptidase 4 soluble form</molecule>
    <subcellularLocation>
        <location evidence="7 18">Secreted</location>
    </subcellularLocation>
    <text evidence="7 18">Detected in the serum and the seminal fluid.</text>
</comment>
<comment type="subcellular location">
    <subcellularLocation>
        <location evidence="6 8 36">Cell membrane</location>
        <topology>Single-pass type II membrane protein</topology>
    </subcellularLocation>
    <subcellularLocation>
        <location evidence="9">Apical cell membrane</location>
        <topology>Single-pass type II membrane protein</topology>
    </subcellularLocation>
    <subcellularLocation>
        <location evidence="20">Cell projection</location>
        <location evidence="20">Invadopodium membrane</location>
        <topology>Single-pass type II membrane protein</topology>
    </subcellularLocation>
    <subcellularLocation>
        <location evidence="20">Cell projection</location>
        <location evidence="20">Lamellipodium membrane</location>
        <topology>Single-pass type II membrane protein</topology>
    </subcellularLocation>
    <subcellularLocation>
        <location evidence="8">Cell junction</location>
    </subcellularLocation>
    <subcellularLocation>
        <location evidence="23">Membrane raft</location>
    </subcellularLocation>
    <text evidence="6 8 9 12 20 23">Translocated to the apical membrane through the concerted action of N- and O-Glycans and its association with lipid microdomains containing cholesterol and sphingolipids (PubMed:11773049). Redistributed to membrane rafts in T-cell in an interleukin-12-dependent activation (PubMed:12676959). Its interaction with CAV1 is necessary for its translocation to membrane rafts (PubMed:17287217). Colocalized with PTPRC in membrane rafts (PubMed:12676959). Colocalized with FAP in invadopodia and lamellipodia of migratory activated endothelial cells in collagenous matrix. Colocalized with FAP on endothelial cells of capillary-like microvessels but not large vessels within invasive breast ductal carcinoma (PubMed:16651416). Colocalized with ADA at the cell junction in lymphocyte-epithelial cell adhesion (PubMed:11772392). Colocalized with IGF2R in internalized cytoplasmic vesicles adjacent to the cell surface (PubMed:10900005).</text>
</comment>
<comment type="tissue specificity">
    <text evidence="22 25">Expressed specifically in lymphatic vessels but not in blood vessels in the skin, small intestine, esophagus, ovary, breast and prostate glands. Not detected in lymphatic vessels in the lung, kidney, uterus, liver and stomach (at protein level). Expressed in the poorly differentiated crypt cells of the small intestine as well as in the mature villous cells. Expressed at very low levels in the colon.</text>
</comment>
<comment type="induction">
    <text evidence="5 12 20 21 34">Up-regulated by IL12/interleukin-12 on activated T-cells. IL12-activated cells expressed enhanced levels of DPP4 but not mRNAs. Down-regulated by TNF. Up-regulated in migratory endothelial cells and in the invasive endothelial cells in tumors. Induced by hypoxia (PubMed:16670267).</text>
</comment>
<comment type="domain">
    <text>The extracellular cysteine-rich region is necessary for association with collagen, dimer formation and optimal dipeptidyl peptidase activity.</text>
</comment>
<comment type="PTM">
    <text>The soluble form (Dipeptidyl peptidase 4 soluble form also named SDPP) derives from the membrane form (Dipeptidyl peptidase 4 membrane form also named MDPP) by proteolytic processing.</text>
</comment>
<comment type="PTM">
    <text evidence="6 9 10 11 14 19 26 27">N- and O-Glycosylated.</text>
</comment>
<comment type="PTM">
    <text evidence="6">Phosphorylated. Mannose 6-phosphate residues in the carbohydrate moiety are necessary for interaction with IGF2R in activated T-cells. Mannose 6-phosphorylation is induced during T-cell activation.</text>
</comment>
<comment type="miscellaneous">
    <text>Level of plasma concentrations of the soluble form (SDPP) can be managed as a colon carcinoma diagnostic and prognostic marker.</text>
</comment>
<comment type="similarity">
    <text evidence="35">Belongs to the peptidase S9B family. DPPIV subfamily.</text>
</comment>
<comment type="online information" name="Wikipedia">
    <link uri="https://en.wikipedia.org/wiki/Dipeptidyl_peptidase-4"/>
    <text>Dipeptidyl peptidase-4 entry</text>
</comment>
<comment type="online information" name="Atlas of Genetics and Cytogenetics in Oncology and Haematology">
    <link uri="https://atlasgeneticsoncology.org/gene/40360/DPP4"/>
</comment>